<protein>
    <recommendedName>
        <fullName evidence="19">Small ribosomal subunit protein uS7</fullName>
    </recommendedName>
    <alternativeName>
        <fullName>30S ribosomal protein S7</fullName>
    </alternativeName>
</protein>
<evidence type="ECO:0000250" key="1">
    <source>
        <dbReference type="UniProtKB" id="P17291"/>
    </source>
</evidence>
<evidence type="ECO:0000269" key="2">
    <source>
    </source>
</evidence>
<evidence type="ECO:0000269" key="3">
    <source>
    </source>
</evidence>
<evidence type="ECO:0000269" key="4">
    <source>
    </source>
</evidence>
<evidence type="ECO:0000269" key="5">
    <source>
    </source>
</evidence>
<evidence type="ECO:0000269" key="6">
    <source>
    </source>
</evidence>
<evidence type="ECO:0000269" key="7">
    <source>
    </source>
</evidence>
<evidence type="ECO:0000269" key="8">
    <source>
    </source>
</evidence>
<evidence type="ECO:0000269" key="9">
    <source>
    </source>
</evidence>
<evidence type="ECO:0000269" key="10">
    <source>
    </source>
</evidence>
<evidence type="ECO:0000269" key="11">
    <source>
    </source>
</evidence>
<evidence type="ECO:0000269" key="12">
    <source>
    </source>
</evidence>
<evidence type="ECO:0000269" key="13">
    <source>
    </source>
</evidence>
<evidence type="ECO:0000269" key="14">
    <source>
    </source>
</evidence>
<evidence type="ECO:0000269" key="15">
    <source>
    </source>
</evidence>
<evidence type="ECO:0000269" key="16">
    <source>
    </source>
</evidence>
<evidence type="ECO:0000269" key="17">
    <source>
    </source>
</evidence>
<evidence type="ECO:0000269" key="18">
    <source ref="7"/>
</evidence>
<evidence type="ECO:0000303" key="19">
    <source>
    </source>
</evidence>
<evidence type="ECO:0000305" key="20"/>
<evidence type="ECO:0000305" key="21">
    <source>
    </source>
</evidence>
<evidence type="ECO:0000305" key="22">
    <source>
    </source>
</evidence>
<evidence type="ECO:0000305" key="23">
    <source>
    </source>
</evidence>
<evidence type="ECO:0007829" key="24">
    <source>
        <dbReference type="PDB" id="7OE1"/>
    </source>
</evidence>
<evidence type="ECO:0007829" key="25">
    <source>
        <dbReference type="PDB" id="8CAZ"/>
    </source>
</evidence>
<evidence type="ECO:0007829" key="26">
    <source>
        <dbReference type="PDB" id="8CF1"/>
    </source>
</evidence>
<evidence type="ECO:0007829" key="27">
    <source>
        <dbReference type="PDB" id="8EYT"/>
    </source>
</evidence>
<name>RS7_ECOLI</name>
<organism>
    <name type="scientific">Escherichia coli (strain K12)</name>
    <dbReference type="NCBI Taxonomy" id="83333"/>
    <lineage>
        <taxon>Bacteria</taxon>
        <taxon>Pseudomonadati</taxon>
        <taxon>Pseudomonadota</taxon>
        <taxon>Gammaproteobacteria</taxon>
        <taxon>Enterobacterales</taxon>
        <taxon>Enterobacteriaceae</taxon>
        <taxon>Escherichia</taxon>
    </lineage>
</organism>
<keyword id="KW-0002">3D-structure</keyword>
<keyword id="KW-0903">Direct protein sequencing</keyword>
<keyword id="KW-1185">Reference proteome</keyword>
<keyword id="KW-0687">Ribonucleoprotein</keyword>
<keyword id="KW-0689">Ribosomal protein</keyword>
<keyword id="KW-0694">RNA-binding</keyword>
<keyword id="KW-0699">rRNA-binding</keyword>
<keyword id="KW-0820">tRNA-binding</keyword>
<accession>P02359</accession>
<accession>Q2M706</accession>
<feature type="initiator methionine" description="Removed" evidence="14">
    <location>
        <position position="1"/>
    </location>
</feature>
<feature type="chain" id="PRO_0000124259" description="Small ribosomal subunit protein uS7">
    <location>
        <begin position="2"/>
        <end position="179"/>
    </location>
</feature>
<feature type="sequence variant" description="In strain: B and L44." evidence="18">
    <location>
        <begin position="157"/>
        <end position="179"/>
    </location>
</feature>
<feature type="mutagenesis site" description="Defective in ribosome assembly; accumulates to abnormally high levels on polysomes; significantly decreases affinity for its own mRNA." evidence="4">
    <location>
        <begin position="2"/>
        <end position="18"/>
    </location>
</feature>
<feature type="mutagenesis site" description="Defective in ribosome assembly." evidence="4">
    <original>K</original>
    <variation>A</variation>
    <variation>E</variation>
    <location>
        <position position="36"/>
    </location>
</feature>
<feature type="mutagenesis site" description="Significantly decreases affinity for its own mRNA." evidence="5">
    <original>M</original>
    <variation>G</variation>
    <location>
        <position position="116"/>
    </location>
</feature>
<feature type="sequence conflict" description="In Ref. 3; AA sequence." evidence="20" ref="3">
    <location>
        <position position="92"/>
    </location>
</feature>
<feature type="turn" evidence="26">
    <location>
        <begin position="16"/>
        <end position="18"/>
    </location>
</feature>
<feature type="helix" evidence="26">
    <location>
        <begin position="21"/>
        <end position="30"/>
    </location>
</feature>
<feature type="strand" evidence="24">
    <location>
        <begin position="32"/>
        <end position="34"/>
    </location>
</feature>
<feature type="helix" evidence="26">
    <location>
        <begin position="36"/>
        <end position="52"/>
    </location>
</feature>
<feature type="helix" evidence="26">
    <location>
        <begin position="58"/>
        <end position="69"/>
    </location>
</feature>
<feature type="strand" evidence="26">
    <location>
        <begin position="72"/>
        <end position="90"/>
    </location>
</feature>
<feature type="helix" evidence="26">
    <location>
        <begin position="93"/>
        <end position="109"/>
    </location>
</feature>
<feature type="strand" evidence="27">
    <location>
        <begin position="110"/>
        <end position="112"/>
    </location>
</feature>
<feature type="strand" evidence="26">
    <location>
        <begin position="113"/>
        <end position="115"/>
    </location>
</feature>
<feature type="helix" evidence="26">
    <location>
        <begin position="116"/>
        <end position="127"/>
    </location>
</feature>
<feature type="turn" evidence="26">
    <location>
        <begin position="128"/>
        <end position="130"/>
    </location>
</feature>
<feature type="helix" evidence="26">
    <location>
        <begin position="133"/>
        <end position="144"/>
    </location>
</feature>
<feature type="strand" evidence="24">
    <location>
        <begin position="145"/>
        <end position="147"/>
    </location>
</feature>
<feature type="helix" evidence="25">
    <location>
        <begin position="149"/>
        <end position="151"/>
    </location>
</feature>
<proteinExistence type="evidence at protein level"/>
<comment type="function">
    <text evidence="3 9 17">One of the primary rRNA binding proteins, it binds directly to 16S rRNA where it nucleates assembly of the head domain of the 30S subunit (PubMed:2461734). Is located at the subunit interface close to the decoding center, where it has been shown to contact mRNA (PubMed:10606263). Has been shown to contact tRNA in both the P and E sites; it probably blocks exit of the E site tRNA (PubMed:8524654).</text>
</comment>
<comment type="function">
    <text evidence="15">Protein S7 is also a translational repressor protein; it regulates the expression of the str operon members to different degrees by binding to its mRNA.</text>
</comment>
<comment type="subunit">
    <text evidence="1 2 6 7 8 10 11 12 13 14 16 17 22 23">Part of the 30S ribosomal subunit (PubMed:10094780, PubMed:12244297, PubMed:12809609, PubMed:16272117, PubMed:27906160, PubMed:27906161, PubMed:27934701, PubMed:28077875, PubMed:385062, PubMed:7556101). Contacts proteins S9 and S11 (By similarity). Cross-links to IF3 and the P and E site tRNAs (PubMed:6349681, PubMed:7000779, PubMed:8524654).</text>
</comment>
<comment type="interaction">
    <interactant intactId="EBI-543074">
        <id>P02359</id>
    </interactant>
    <interactant intactId="EBI-546262">
        <id>P0A707</id>
        <label>infC</label>
    </interactant>
    <organismsDiffer>false</organismsDiffer>
    <experiments>4</experiments>
</comment>
<comment type="interaction">
    <interactant intactId="EBI-543074">
        <id>P02359</id>
    </interactant>
    <interactant intactId="EBI-561550">
        <id>P37765</id>
        <label>rluB</label>
    </interactant>
    <organismsDiffer>false</organismsDiffer>
    <experiments>4</experiments>
</comment>
<comment type="interaction">
    <interactant intactId="EBI-543074">
        <id>P02359</id>
    </interactant>
    <interactant intactId="EBI-544862">
        <id>P0A850</id>
        <label>tig</label>
    </interactant>
    <organismsDiffer>false</organismsDiffer>
    <experiments>4</experiments>
</comment>
<comment type="mass spectrometry"/>
<comment type="miscellaneous">
    <text>The strain K12 sequence is shown.</text>
</comment>
<comment type="miscellaneous">
    <text evidence="21 22 23">Has been predicted to contact the N-terminal domain of IF-3 based on footprint studies; exactly how IF-3 interacts with the 30S subunit is controversial (PubMed:11684020, PubMed:6349681, PubMed:7000779).</text>
</comment>
<comment type="similarity">
    <text evidence="20">Belongs to the universal ribosomal protein uS7 family.</text>
</comment>
<gene>
    <name type="primary">rpsG</name>
    <name type="ordered locus">b3341</name>
    <name type="ordered locus">JW3303</name>
</gene>
<dbReference type="EMBL" id="U18997">
    <property type="protein sequence ID" value="AAA58138.1"/>
    <property type="molecule type" value="Genomic_DNA"/>
</dbReference>
<dbReference type="EMBL" id="U00096">
    <property type="protein sequence ID" value="AAC76366.1"/>
    <property type="molecule type" value="Genomic_DNA"/>
</dbReference>
<dbReference type="EMBL" id="AP009048">
    <property type="protein sequence ID" value="BAE77950.1"/>
    <property type="molecule type" value="Genomic_DNA"/>
</dbReference>
<dbReference type="EMBL" id="V00355">
    <property type="protein sequence ID" value="CAA23649.1"/>
    <property type="molecule type" value="Genomic_DNA"/>
</dbReference>
<dbReference type="EMBL" id="AH002539">
    <property type="protein sequence ID" value="AAA50990.1"/>
    <property type="molecule type" value="Genomic_DNA"/>
</dbReference>
<dbReference type="EMBL" id="X64592">
    <property type="protein sequence ID" value="CAA45881.1"/>
    <property type="molecule type" value="Genomic_DNA"/>
</dbReference>
<dbReference type="EMBL" id="X65735">
    <property type="protein sequence ID" value="CAA46644.1"/>
    <property type="molecule type" value="Genomic_DNA"/>
</dbReference>
<dbReference type="EMBL" id="AH002539">
    <property type="protein sequence ID" value="AAA50989.1"/>
    <property type="molecule type" value="Genomic_DNA"/>
</dbReference>
<dbReference type="PIR" id="H65127">
    <property type="entry name" value="R3EC7K"/>
</dbReference>
<dbReference type="RefSeq" id="NP_417800.1">
    <property type="nucleotide sequence ID" value="NC_000913.3"/>
</dbReference>
<dbReference type="PDB" id="1EG0">
    <property type="method" value="EM"/>
    <property type="resolution" value="11.50 A"/>
    <property type="chains" value="D=1-146"/>
</dbReference>
<dbReference type="PDB" id="1ML5">
    <property type="method" value="EM"/>
    <property type="resolution" value="14.00 A"/>
    <property type="chains" value="J=1-156"/>
</dbReference>
<dbReference type="PDB" id="2YKR">
    <property type="method" value="EM"/>
    <property type="resolution" value="9.80 A"/>
    <property type="chains" value="G=2-152"/>
</dbReference>
<dbReference type="PDB" id="3J5S">
    <property type="method" value="EM"/>
    <property type="resolution" value="7.50 A"/>
    <property type="chains" value="I=2-152"/>
</dbReference>
<dbReference type="PDB" id="3J9Y">
    <property type="method" value="EM"/>
    <property type="resolution" value="3.90 A"/>
    <property type="chains" value="g=1-179"/>
</dbReference>
<dbReference type="PDB" id="3J9Z">
    <property type="method" value="EM"/>
    <property type="resolution" value="3.60 A"/>
    <property type="chains" value="SG=2-179"/>
</dbReference>
<dbReference type="PDB" id="3JA1">
    <property type="method" value="EM"/>
    <property type="resolution" value="3.60 A"/>
    <property type="chains" value="SG=2-179"/>
</dbReference>
<dbReference type="PDB" id="3JBU">
    <property type="method" value="EM"/>
    <property type="resolution" value="3.64 A"/>
    <property type="chains" value="G=1-156"/>
</dbReference>
<dbReference type="PDB" id="3JBV">
    <property type="method" value="EM"/>
    <property type="resolution" value="3.32 A"/>
    <property type="chains" value="G=1-156"/>
</dbReference>
<dbReference type="PDB" id="3JCD">
    <property type="method" value="EM"/>
    <property type="resolution" value="3.70 A"/>
    <property type="chains" value="g=1-179"/>
</dbReference>
<dbReference type="PDB" id="3JCE">
    <property type="method" value="EM"/>
    <property type="resolution" value="3.20 A"/>
    <property type="chains" value="g=1-179"/>
</dbReference>
<dbReference type="PDB" id="3JCJ">
    <property type="method" value="EM"/>
    <property type="resolution" value="3.70 A"/>
    <property type="chains" value="m=1-179"/>
</dbReference>
<dbReference type="PDB" id="3JCN">
    <property type="method" value="EM"/>
    <property type="resolution" value="4.60 A"/>
    <property type="chains" value="h=1-179"/>
</dbReference>
<dbReference type="PDB" id="4A2I">
    <property type="method" value="EM"/>
    <property type="resolution" value="16.50 A"/>
    <property type="chains" value="G=3-152"/>
</dbReference>
<dbReference type="PDB" id="4ADV">
    <property type="method" value="EM"/>
    <property type="resolution" value="13.50 A"/>
    <property type="chains" value="G=2-179"/>
</dbReference>
<dbReference type="PDB" id="4U1U">
    <property type="method" value="X-ray"/>
    <property type="resolution" value="2.95 A"/>
    <property type="chains" value="AG/CG=2-152"/>
</dbReference>
<dbReference type="PDB" id="4U1V">
    <property type="method" value="X-ray"/>
    <property type="resolution" value="3.00 A"/>
    <property type="chains" value="AG/CG=2-152"/>
</dbReference>
<dbReference type="PDB" id="4U20">
    <property type="method" value="X-ray"/>
    <property type="resolution" value="2.90 A"/>
    <property type="chains" value="AG/CG=2-152"/>
</dbReference>
<dbReference type="PDB" id="4U24">
    <property type="method" value="X-ray"/>
    <property type="resolution" value="2.90 A"/>
    <property type="chains" value="AG/CG=2-152"/>
</dbReference>
<dbReference type="PDB" id="4U25">
    <property type="method" value="X-ray"/>
    <property type="resolution" value="2.90 A"/>
    <property type="chains" value="AG/CG=2-152"/>
</dbReference>
<dbReference type="PDB" id="4U26">
    <property type="method" value="X-ray"/>
    <property type="resolution" value="2.80 A"/>
    <property type="chains" value="AG/CG=2-152"/>
</dbReference>
<dbReference type="PDB" id="4U27">
    <property type="method" value="X-ray"/>
    <property type="resolution" value="2.80 A"/>
    <property type="chains" value="AG/CG=2-152"/>
</dbReference>
<dbReference type="PDB" id="4V47">
    <property type="method" value="EM"/>
    <property type="resolution" value="12.30 A"/>
    <property type="chains" value="BG=2-179"/>
</dbReference>
<dbReference type="PDB" id="4V48">
    <property type="method" value="EM"/>
    <property type="resolution" value="11.50 A"/>
    <property type="chains" value="BG=2-179"/>
</dbReference>
<dbReference type="PDB" id="4V4H">
    <property type="method" value="X-ray"/>
    <property type="resolution" value="3.46 A"/>
    <property type="chains" value="AG/CG=1-179"/>
</dbReference>
<dbReference type="PDB" id="4V4Q">
    <property type="method" value="X-ray"/>
    <property type="resolution" value="3.46 A"/>
    <property type="chains" value="AG/CG=2-179"/>
</dbReference>
<dbReference type="PDB" id="4V4V">
    <property type="method" value="EM"/>
    <property type="resolution" value="15.00 A"/>
    <property type="chains" value="AG=20-156"/>
</dbReference>
<dbReference type="PDB" id="4V4W">
    <property type="method" value="EM"/>
    <property type="resolution" value="15.00 A"/>
    <property type="chains" value="AG=20-156"/>
</dbReference>
<dbReference type="PDB" id="4V50">
    <property type="method" value="X-ray"/>
    <property type="resolution" value="3.22 A"/>
    <property type="chains" value="AG/CG=2-179"/>
</dbReference>
<dbReference type="PDB" id="4V52">
    <property type="method" value="X-ray"/>
    <property type="resolution" value="3.21 A"/>
    <property type="chains" value="AG/CG=2-179"/>
</dbReference>
<dbReference type="PDB" id="4V53">
    <property type="method" value="X-ray"/>
    <property type="resolution" value="3.54 A"/>
    <property type="chains" value="AG/CG=2-179"/>
</dbReference>
<dbReference type="PDB" id="4V54">
    <property type="method" value="X-ray"/>
    <property type="resolution" value="3.30 A"/>
    <property type="chains" value="AG/CG=2-179"/>
</dbReference>
<dbReference type="PDB" id="4V55">
    <property type="method" value="X-ray"/>
    <property type="resolution" value="4.00 A"/>
    <property type="chains" value="AG/CG=2-179"/>
</dbReference>
<dbReference type="PDB" id="4V56">
    <property type="method" value="X-ray"/>
    <property type="resolution" value="3.93 A"/>
    <property type="chains" value="AG/CG=2-179"/>
</dbReference>
<dbReference type="PDB" id="4V57">
    <property type="method" value="X-ray"/>
    <property type="resolution" value="3.50 A"/>
    <property type="chains" value="AG/CG=2-179"/>
</dbReference>
<dbReference type="PDB" id="4V5B">
    <property type="method" value="X-ray"/>
    <property type="resolution" value="3.74 A"/>
    <property type="chains" value="BG/DG=2-179"/>
</dbReference>
<dbReference type="PDB" id="4V5H">
    <property type="method" value="EM"/>
    <property type="resolution" value="5.80 A"/>
    <property type="chains" value="AG=3-152"/>
</dbReference>
<dbReference type="PDB" id="4V5Y">
    <property type="method" value="X-ray"/>
    <property type="resolution" value="4.45 A"/>
    <property type="chains" value="AG/CG=2-179"/>
</dbReference>
<dbReference type="PDB" id="4V64">
    <property type="method" value="X-ray"/>
    <property type="resolution" value="3.50 A"/>
    <property type="chains" value="AG/CG=2-179"/>
</dbReference>
<dbReference type="PDB" id="4V65">
    <property type="method" value="EM"/>
    <property type="resolution" value="9.00 A"/>
    <property type="chains" value="AU=1-179"/>
</dbReference>
<dbReference type="PDB" id="4V66">
    <property type="method" value="EM"/>
    <property type="resolution" value="9.00 A"/>
    <property type="chains" value="AU=1-179"/>
</dbReference>
<dbReference type="PDB" id="4V69">
    <property type="method" value="EM"/>
    <property type="resolution" value="6.70 A"/>
    <property type="chains" value="AG=3-152"/>
</dbReference>
<dbReference type="PDB" id="4V6C">
    <property type="method" value="X-ray"/>
    <property type="resolution" value="3.19 A"/>
    <property type="chains" value="AG/CG=1-179"/>
</dbReference>
<dbReference type="PDB" id="4V6D">
    <property type="method" value="X-ray"/>
    <property type="resolution" value="3.81 A"/>
    <property type="chains" value="AG/CG=1-179"/>
</dbReference>
<dbReference type="PDB" id="4V6E">
    <property type="method" value="X-ray"/>
    <property type="resolution" value="3.71 A"/>
    <property type="chains" value="AG/CG=1-179"/>
</dbReference>
<dbReference type="PDB" id="4V6K">
    <property type="method" value="EM"/>
    <property type="resolution" value="8.25 A"/>
    <property type="chains" value="BK=1-179"/>
</dbReference>
<dbReference type="PDB" id="4V6L">
    <property type="method" value="EM"/>
    <property type="resolution" value="13.20 A"/>
    <property type="chains" value="AK=1-179"/>
</dbReference>
<dbReference type="PDB" id="4V6M">
    <property type="method" value="EM"/>
    <property type="resolution" value="7.10 A"/>
    <property type="chains" value="AG=2-179"/>
</dbReference>
<dbReference type="PDB" id="4V6N">
    <property type="method" value="EM"/>
    <property type="resolution" value="12.10 A"/>
    <property type="chains" value="BJ=2-179"/>
</dbReference>
<dbReference type="PDB" id="4V6O">
    <property type="method" value="EM"/>
    <property type="resolution" value="14.70 A"/>
    <property type="chains" value="AJ=2-179"/>
</dbReference>
<dbReference type="PDB" id="4V6P">
    <property type="method" value="EM"/>
    <property type="resolution" value="13.50 A"/>
    <property type="chains" value="AJ=2-179"/>
</dbReference>
<dbReference type="PDB" id="4V6Q">
    <property type="method" value="EM"/>
    <property type="resolution" value="11.50 A"/>
    <property type="chains" value="AJ=2-179"/>
</dbReference>
<dbReference type="PDB" id="4V6R">
    <property type="method" value="EM"/>
    <property type="resolution" value="11.50 A"/>
    <property type="chains" value="AJ=2-179"/>
</dbReference>
<dbReference type="PDB" id="4V6S">
    <property type="method" value="EM"/>
    <property type="resolution" value="13.10 A"/>
    <property type="chains" value="BI=2-179"/>
</dbReference>
<dbReference type="PDB" id="4V6T">
    <property type="method" value="EM"/>
    <property type="resolution" value="8.30 A"/>
    <property type="chains" value="AG=2-152"/>
</dbReference>
<dbReference type="PDB" id="4V6V">
    <property type="method" value="EM"/>
    <property type="resolution" value="9.80 A"/>
    <property type="chains" value="AG=2-179"/>
</dbReference>
<dbReference type="PDB" id="4V6Y">
    <property type="method" value="EM"/>
    <property type="resolution" value="12.00 A"/>
    <property type="chains" value="AG=3-152"/>
</dbReference>
<dbReference type="PDB" id="4V6Z">
    <property type="method" value="EM"/>
    <property type="resolution" value="12.00 A"/>
    <property type="chains" value="AG=3-152"/>
</dbReference>
<dbReference type="PDB" id="4V70">
    <property type="method" value="EM"/>
    <property type="resolution" value="17.00 A"/>
    <property type="chains" value="AG=3-152"/>
</dbReference>
<dbReference type="PDB" id="4V71">
    <property type="method" value="EM"/>
    <property type="resolution" value="20.00 A"/>
    <property type="chains" value="AG=3-152"/>
</dbReference>
<dbReference type="PDB" id="4V72">
    <property type="method" value="EM"/>
    <property type="resolution" value="13.00 A"/>
    <property type="chains" value="AG=3-152"/>
</dbReference>
<dbReference type="PDB" id="4V73">
    <property type="method" value="EM"/>
    <property type="resolution" value="15.00 A"/>
    <property type="chains" value="AG=3-152"/>
</dbReference>
<dbReference type="PDB" id="4V74">
    <property type="method" value="EM"/>
    <property type="resolution" value="17.00 A"/>
    <property type="chains" value="AG=3-152"/>
</dbReference>
<dbReference type="PDB" id="4V75">
    <property type="method" value="EM"/>
    <property type="resolution" value="12.00 A"/>
    <property type="chains" value="AG=3-152"/>
</dbReference>
<dbReference type="PDB" id="4V76">
    <property type="method" value="EM"/>
    <property type="resolution" value="17.00 A"/>
    <property type="chains" value="AG=3-152"/>
</dbReference>
<dbReference type="PDB" id="4V77">
    <property type="method" value="EM"/>
    <property type="resolution" value="17.00 A"/>
    <property type="chains" value="AG=3-152"/>
</dbReference>
<dbReference type="PDB" id="4V78">
    <property type="method" value="EM"/>
    <property type="resolution" value="20.00 A"/>
    <property type="chains" value="AG=3-152"/>
</dbReference>
<dbReference type="PDB" id="4V79">
    <property type="method" value="EM"/>
    <property type="resolution" value="15.00 A"/>
    <property type="chains" value="AG=3-152"/>
</dbReference>
<dbReference type="PDB" id="4V7A">
    <property type="method" value="EM"/>
    <property type="resolution" value="9.00 A"/>
    <property type="chains" value="AG=3-152"/>
</dbReference>
<dbReference type="PDB" id="4V7B">
    <property type="method" value="EM"/>
    <property type="resolution" value="6.80 A"/>
    <property type="chains" value="AG=1-179"/>
</dbReference>
<dbReference type="PDB" id="4V7C">
    <property type="method" value="EM"/>
    <property type="resolution" value="7.60 A"/>
    <property type="chains" value="AG=2-179"/>
</dbReference>
<dbReference type="PDB" id="4V7D">
    <property type="method" value="EM"/>
    <property type="resolution" value="7.60 A"/>
    <property type="chains" value="BG=2-179"/>
</dbReference>
<dbReference type="PDB" id="4V7I">
    <property type="method" value="EM"/>
    <property type="resolution" value="9.60 A"/>
    <property type="chains" value="BG=1-179"/>
</dbReference>
<dbReference type="PDB" id="4V7S">
    <property type="method" value="X-ray"/>
    <property type="resolution" value="3.25 A"/>
    <property type="chains" value="AG=2-152, CG=3-152"/>
</dbReference>
<dbReference type="PDB" id="4V7T">
    <property type="method" value="X-ray"/>
    <property type="resolution" value="3.19 A"/>
    <property type="chains" value="AG=2-152, CG=3-152"/>
</dbReference>
<dbReference type="PDB" id="4V7U">
    <property type="method" value="X-ray"/>
    <property type="resolution" value="3.10 A"/>
    <property type="chains" value="AG/CG=2-152"/>
</dbReference>
<dbReference type="PDB" id="4V7V">
    <property type="method" value="X-ray"/>
    <property type="resolution" value="3.29 A"/>
    <property type="chains" value="AG=2-152, CG=3-152"/>
</dbReference>
<dbReference type="PDB" id="4V85">
    <property type="method" value="X-ray"/>
    <property type="resolution" value="3.20 A"/>
    <property type="chains" value="AG=1-156"/>
</dbReference>
<dbReference type="PDB" id="4V89">
    <property type="method" value="X-ray"/>
    <property type="resolution" value="3.70 A"/>
    <property type="chains" value="AG=1-179"/>
</dbReference>
<dbReference type="PDB" id="4V9C">
    <property type="method" value="X-ray"/>
    <property type="resolution" value="3.30 A"/>
    <property type="chains" value="AG/CG=1-179"/>
</dbReference>
<dbReference type="PDB" id="4V9D">
    <property type="method" value="X-ray"/>
    <property type="resolution" value="3.00 A"/>
    <property type="chains" value="AG/BG=2-152"/>
</dbReference>
<dbReference type="PDB" id="4V9O">
    <property type="method" value="X-ray"/>
    <property type="resolution" value="2.90 A"/>
    <property type="chains" value="BG/DG/FG/HG=1-179"/>
</dbReference>
<dbReference type="PDB" id="4V9P">
    <property type="method" value="X-ray"/>
    <property type="resolution" value="2.90 A"/>
    <property type="chains" value="BG/DG/FG/HG=1-179"/>
</dbReference>
<dbReference type="PDB" id="4WF1">
    <property type="method" value="X-ray"/>
    <property type="resolution" value="3.09 A"/>
    <property type="chains" value="AG/CG=2-152"/>
</dbReference>
<dbReference type="PDB" id="4WOI">
    <property type="method" value="X-ray"/>
    <property type="resolution" value="3.00 A"/>
    <property type="chains" value="AG/DG=1-179"/>
</dbReference>
<dbReference type="PDB" id="4WWW">
    <property type="method" value="X-ray"/>
    <property type="resolution" value="3.10 A"/>
    <property type="chains" value="QG/XG=2-152"/>
</dbReference>
<dbReference type="PDB" id="4YBB">
    <property type="method" value="X-ray"/>
    <property type="resolution" value="2.10 A"/>
    <property type="chains" value="AG/BG=2-152"/>
</dbReference>
<dbReference type="PDB" id="5AFI">
    <property type="method" value="EM"/>
    <property type="resolution" value="2.90 A"/>
    <property type="chains" value="g=1-179"/>
</dbReference>
<dbReference type="PDB" id="5H5U">
    <property type="method" value="EM"/>
    <property type="resolution" value="3.00 A"/>
    <property type="chains" value="n=2-179"/>
</dbReference>
<dbReference type="PDB" id="5IQR">
    <property type="method" value="EM"/>
    <property type="resolution" value="3.00 A"/>
    <property type="chains" value="l=1-179"/>
</dbReference>
<dbReference type="PDB" id="5IT8">
    <property type="method" value="X-ray"/>
    <property type="resolution" value="3.12 A"/>
    <property type="chains" value="AG/BG=2-152"/>
</dbReference>
<dbReference type="PDB" id="5J5B">
    <property type="method" value="X-ray"/>
    <property type="resolution" value="2.80 A"/>
    <property type="chains" value="AG/BG=2-152"/>
</dbReference>
<dbReference type="PDB" id="5J7L">
    <property type="method" value="X-ray"/>
    <property type="resolution" value="3.00 A"/>
    <property type="chains" value="AG/BG=2-152"/>
</dbReference>
<dbReference type="PDB" id="5J88">
    <property type="method" value="X-ray"/>
    <property type="resolution" value="3.32 A"/>
    <property type="chains" value="AG/BG=2-152"/>
</dbReference>
<dbReference type="PDB" id="5J8A">
    <property type="method" value="X-ray"/>
    <property type="resolution" value="3.10 A"/>
    <property type="chains" value="AG/BG=2-152"/>
</dbReference>
<dbReference type="PDB" id="5J91">
    <property type="method" value="X-ray"/>
    <property type="resolution" value="2.96 A"/>
    <property type="chains" value="AG/BG=2-152"/>
</dbReference>
<dbReference type="PDB" id="5JC9">
    <property type="method" value="X-ray"/>
    <property type="resolution" value="3.03 A"/>
    <property type="chains" value="AG/BG=2-152"/>
</dbReference>
<dbReference type="PDB" id="5JTE">
    <property type="method" value="EM"/>
    <property type="resolution" value="3.60 A"/>
    <property type="chains" value="AG=1-179"/>
</dbReference>
<dbReference type="PDB" id="5JU8">
    <property type="method" value="EM"/>
    <property type="resolution" value="3.60 A"/>
    <property type="chains" value="AG=1-179"/>
</dbReference>
<dbReference type="PDB" id="5KCR">
    <property type="method" value="EM"/>
    <property type="resolution" value="3.60 A"/>
    <property type="chains" value="1g=1-179"/>
</dbReference>
<dbReference type="PDB" id="5KCS">
    <property type="method" value="EM"/>
    <property type="resolution" value="3.90 A"/>
    <property type="chains" value="1g=1-179"/>
</dbReference>
<dbReference type="PDB" id="5KPS">
    <property type="method" value="EM"/>
    <property type="resolution" value="3.90 A"/>
    <property type="chains" value="12=1-179"/>
</dbReference>
<dbReference type="PDB" id="5KPV">
    <property type="method" value="EM"/>
    <property type="resolution" value="4.10 A"/>
    <property type="chains" value="11=1-179"/>
</dbReference>
<dbReference type="PDB" id="5KPW">
    <property type="method" value="EM"/>
    <property type="resolution" value="3.90 A"/>
    <property type="chains" value="11=1-179"/>
</dbReference>
<dbReference type="PDB" id="5KPX">
    <property type="method" value="EM"/>
    <property type="resolution" value="3.90 A"/>
    <property type="chains" value="11=1-179"/>
</dbReference>
<dbReference type="PDB" id="5L3P">
    <property type="method" value="EM"/>
    <property type="resolution" value="3.70 A"/>
    <property type="chains" value="g=1-179"/>
</dbReference>
<dbReference type="PDB" id="5LZA">
    <property type="method" value="EM"/>
    <property type="resolution" value="3.60 A"/>
    <property type="chains" value="g=2-152"/>
</dbReference>
<dbReference type="PDB" id="5LZB">
    <property type="method" value="EM"/>
    <property type="resolution" value="5.30 A"/>
    <property type="chains" value="g=2-152"/>
</dbReference>
<dbReference type="PDB" id="5LZC">
    <property type="method" value="EM"/>
    <property type="resolution" value="4.80 A"/>
    <property type="chains" value="g=2-152"/>
</dbReference>
<dbReference type="PDB" id="5LZD">
    <property type="method" value="EM"/>
    <property type="resolution" value="3.40 A"/>
    <property type="chains" value="g=2-152"/>
</dbReference>
<dbReference type="PDB" id="5LZE">
    <property type="method" value="EM"/>
    <property type="resolution" value="3.50 A"/>
    <property type="chains" value="g=2-152"/>
</dbReference>
<dbReference type="PDB" id="5LZF">
    <property type="method" value="EM"/>
    <property type="resolution" value="4.60 A"/>
    <property type="chains" value="g=2-152"/>
</dbReference>
<dbReference type="PDB" id="5MDV">
    <property type="method" value="EM"/>
    <property type="resolution" value="2.97 A"/>
    <property type="chains" value="l=1-179"/>
</dbReference>
<dbReference type="PDB" id="5MDW">
    <property type="method" value="EM"/>
    <property type="resolution" value="3.06 A"/>
    <property type="chains" value="l=1-179"/>
</dbReference>
<dbReference type="PDB" id="5MDY">
    <property type="method" value="EM"/>
    <property type="resolution" value="3.35 A"/>
    <property type="chains" value="l=1-179"/>
</dbReference>
<dbReference type="PDB" id="5MDZ">
    <property type="method" value="EM"/>
    <property type="resolution" value="3.10 A"/>
    <property type="chains" value="l=1-179"/>
</dbReference>
<dbReference type="PDB" id="5ME0">
    <property type="method" value="EM"/>
    <property type="resolution" value="13.50 A"/>
    <property type="chains" value="G=1-156"/>
</dbReference>
<dbReference type="PDB" id="5ME1">
    <property type="method" value="EM"/>
    <property type="resolution" value="13.50 A"/>
    <property type="chains" value="G=1-156"/>
</dbReference>
<dbReference type="PDB" id="5MGP">
    <property type="method" value="EM"/>
    <property type="resolution" value="3.10 A"/>
    <property type="chains" value="g=2-152"/>
</dbReference>
<dbReference type="PDB" id="5MY1">
    <property type="method" value="EM"/>
    <property type="resolution" value="7.60 A"/>
    <property type="chains" value="G=2-179"/>
</dbReference>
<dbReference type="PDB" id="5NO2">
    <property type="method" value="EM"/>
    <property type="resolution" value="5.16 A"/>
    <property type="chains" value="G=2-131"/>
</dbReference>
<dbReference type="PDB" id="5NO3">
    <property type="method" value="EM"/>
    <property type="resolution" value="5.16 A"/>
    <property type="chains" value="G=2-131"/>
</dbReference>
<dbReference type="PDB" id="5NO4">
    <property type="method" value="EM"/>
    <property type="resolution" value="5.16 A"/>
    <property type="chains" value="G=2-131"/>
</dbReference>
<dbReference type="PDB" id="5NP6">
    <property type="method" value="EM"/>
    <property type="resolution" value="3.60 A"/>
    <property type="chains" value="J=2-152"/>
</dbReference>
<dbReference type="PDB" id="5NWY">
    <property type="method" value="EM"/>
    <property type="resolution" value="2.93 A"/>
    <property type="chains" value="6=1-156"/>
</dbReference>
<dbReference type="PDB" id="5O2R">
    <property type="method" value="EM"/>
    <property type="resolution" value="3.40 A"/>
    <property type="chains" value="g=2-152"/>
</dbReference>
<dbReference type="PDB" id="5U4I">
    <property type="method" value="EM"/>
    <property type="resolution" value="3.50 A"/>
    <property type="chains" value="g=1-179"/>
</dbReference>
<dbReference type="PDB" id="5U9F">
    <property type="method" value="EM"/>
    <property type="resolution" value="3.20 A"/>
    <property type="chains" value="G=1-156"/>
</dbReference>
<dbReference type="PDB" id="5U9G">
    <property type="method" value="EM"/>
    <property type="resolution" value="3.20 A"/>
    <property type="chains" value="G=1-156"/>
</dbReference>
<dbReference type="PDB" id="5UYK">
    <property type="method" value="EM"/>
    <property type="resolution" value="3.90 A"/>
    <property type="chains" value="G=2-152"/>
</dbReference>
<dbReference type="PDB" id="5UYL">
    <property type="method" value="EM"/>
    <property type="resolution" value="3.60 A"/>
    <property type="chains" value="G=2-152"/>
</dbReference>
<dbReference type="PDB" id="5UYM">
    <property type="method" value="EM"/>
    <property type="resolution" value="3.20 A"/>
    <property type="chains" value="G=2-152"/>
</dbReference>
<dbReference type="PDB" id="5UYN">
    <property type="method" value="EM"/>
    <property type="resolution" value="4.00 A"/>
    <property type="chains" value="G=2-152"/>
</dbReference>
<dbReference type="PDB" id="5UYP">
    <property type="method" value="EM"/>
    <property type="resolution" value="3.90 A"/>
    <property type="chains" value="G=2-152"/>
</dbReference>
<dbReference type="PDB" id="5UYQ">
    <property type="method" value="EM"/>
    <property type="resolution" value="3.80 A"/>
    <property type="chains" value="G=2-152"/>
</dbReference>
<dbReference type="PDB" id="5UZ4">
    <property type="method" value="EM"/>
    <property type="resolution" value="5.80 A"/>
    <property type="chains" value="G=1-179"/>
</dbReference>
<dbReference type="PDB" id="5WDT">
    <property type="method" value="EM"/>
    <property type="resolution" value="3.00 A"/>
    <property type="chains" value="g=2-152"/>
</dbReference>
<dbReference type="PDB" id="5WE4">
    <property type="method" value="EM"/>
    <property type="resolution" value="3.10 A"/>
    <property type="chains" value="g=2-152"/>
</dbReference>
<dbReference type="PDB" id="5WE6">
    <property type="method" value="EM"/>
    <property type="resolution" value="3.40 A"/>
    <property type="chains" value="g=2-152"/>
</dbReference>
<dbReference type="PDB" id="5WF0">
    <property type="method" value="EM"/>
    <property type="resolution" value="3.60 A"/>
    <property type="chains" value="g=2-152"/>
</dbReference>
<dbReference type="PDB" id="5WFK">
    <property type="method" value="EM"/>
    <property type="resolution" value="3.40 A"/>
    <property type="chains" value="g=2-152"/>
</dbReference>
<dbReference type="PDB" id="5WFS">
    <property type="method" value="EM"/>
    <property type="resolution" value="3.00 A"/>
    <property type="chains" value="g=2-152"/>
</dbReference>
<dbReference type="PDB" id="6AWB">
    <property type="method" value="EM"/>
    <property type="resolution" value="6.70 A"/>
    <property type="chains" value="J=2-152"/>
</dbReference>
<dbReference type="PDB" id="6AWC">
    <property type="method" value="EM"/>
    <property type="resolution" value="7.90 A"/>
    <property type="chains" value="J=2-152"/>
</dbReference>
<dbReference type="PDB" id="6AWD">
    <property type="method" value="EM"/>
    <property type="resolution" value="8.10 A"/>
    <property type="chains" value="J=2-152"/>
</dbReference>
<dbReference type="PDB" id="6BU8">
    <property type="method" value="EM"/>
    <property type="resolution" value="3.50 A"/>
    <property type="chains" value="G=2-152"/>
</dbReference>
<dbReference type="PDB" id="6BY1">
    <property type="method" value="X-ray"/>
    <property type="resolution" value="3.94 A"/>
    <property type="chains" value="AG/BG=1-179"/>
</dbReference>
<dbReference type="PDB" id="6C4I">
    <property type="method" value="EM"/>
    <property type="resolution" value="3.24 A"/>
    <property type="chains" value="g=1-179"/>
</dbReference>
<dbReference type="PDB" id="6DNC">
    <property type="method" value="EM"/>
    <property type="resolution" value="3.70 A"/>
    <property type="chains" value="TA=1-156"/>
</dbReference>
<dbReference type="PDB" id="6ENF">
    <property type="method" value="EM"/>
    <property type="resolution" value="3.20 A"/>
    <property type="chains" value="g=2-152"/>
</dbReference>
<dbReference type="PDB" id="6ENJ">
    <property type="method" value="EM"/>
    <property type="resolution" value="3.70 A"/>
    <property type="chains" value="g=2-152"/>
</dbReference>
<dbReference type="PDB" id="6ENU">
    <property type="method" value="EM"/>
    <property type="resolution" value="3.10 A"/>
    <property type="chains" value="g=2-152"/>
</dbReference>
<dbReference type="PDB" id="6GWT">
    <property type="method" value="EM"/>
    <property type="resolution" value="3.80 A"/>
    <property type="chains" value="g=2-152"/>
</dbReference>
<dbReference type="PDB" id="6GXM">
    <property type="method" value="EM"/>
    <property type="resolution" value="3.80 A"/>
    <property type="chains" value="g=2-152"/>
</dbReference>
<dbReference type="PDB" id="6GXN">
    <property type="method" value="EM"/>
    <property type="resolution" value="3.90 A"/>
    <property type="chains" value="g=2-152"/>
</dbReference>
<dbReference type="PDB" id="6GXO">
    <property type="method" value="EM"/>
    <property type="resolution" value="3.90 A"/>
    <property type="chains" value="g=2-152"/>
</dbReference>
<dbReference type="PDB" id="6GXP">
    <property type="method" value="EM"/>
    <property type="resolution" value="4.40 A"/>
    <property type="chains" value="g=2-152"/>
</dbReference>
<dbReference type="PDB" id="6H4N">
    <property type="method" value="EM"/>
    <property type="resolution" value="3.00 A"/>
    <property type="chains" value="g=2-162"/>
</dbReference>
<dbReference type="PDB" id="6H58">
    <property type="method" value="EM"/>
    <property type="resolution" value="7.90 A"/>
    <property type="chains" value="g/gg=2-162"/>
</dbReference>
<dbReference type="PDB" id="6HRM">
    <property type="method" value="EM"/>
    <property type="resolution" value="2.96 A"/>
    <property type="chains" value="l=2-152"/>
</dbReference>
<dbReference type="PDB" id="6I7V">
    <property type="method" value="X-ray"/>
    <property type="resolution" value="2.90 A"/>
    <property type="chains" value="AG/BG=2-152"/>
</dbReference>
<dbReference type="PDB" id="6O7K">
    <property type="method" value="EM"/>
    <property type="resolution" value="4.20 A"/>
    <property type="chains" value="m=2-152"/>
</dbReference>
<dbReference type="PDB" id="6O9J">
    <property type="method" value="EM"/>
    <property type="resolution" value="3.90 A"/>
    <property type="chains" value="g=3-152"/>
</dbReference>
<dbReference type="PDB" id="6O9K">
    <property type="method" value="EM"/>
    <property type="resolution" value="4.00 A"/>
    <property type="chains" value="g=2-152"/>
</dbReference>
<dbReference type="PDB" id="6OFX">
    <property type="method" value="EM"/>
    <property type="resolution" value="3.30 A"/>
    <property type="chains" value="L=2-152"/>
</dbReference>
<dbReference type="PDB" id="6OG7">
    <property type="method" value="EM"/>
    <property type="resolution" value="3.30 A"/>
    <property type="chains" value="L=2-152"/>
</dbReference>
<dbReference type="PDB" id="6OGF">
    <property type="method" value="EM"/>
    <property type="resolution" value="3.90 A"/>
    <property type="chains" value="L=1-156"/>
</dbReference>
<dbReference type="PDB" id="6OGG">
    <property type="method" value="EM"/>
    <property type="resolution" value="4.20 A"/>
    <property type="chains" value="L=1-156"/>
</dbReference>
<dbReference type="PDB" id="6OGI">
    <property type="method" value="EM"/>
    <property type="resolution" value="3.40 A"/>
    <property type="chains" value="L=1-156"/>
</dbReference>
<dbReference type="PDB" id="6OM6">
    <property type="method" value="EM"/>
    <property type="resolution" value="3.10 A"/>
    <property type="chains" value="l=1-179"/>
</dbReference>
<dbReference type="PDB" id="6ORE">
    <property type="method" value="EM"/>
    <property type="resolution" value="2.90 A"/>
    <property type="chains" value="l=2-152"/>
</dbReference>
<dbReference type="PDB" id="6ORL">
    <property type="method" value="EM"/>
    <property type="resolution" value="3.50 A"/>
    <property type="chains" value="l=2-152"/>
</dbReference>
<dbReference type="PDB" id="6OSK">
    <property type="method" value="EM"/>
    <property type="resolution" value="3.60 A"/>
    <property type="chains" value="l=2-152"/>
</dbReference>
<dbReference type="PDB" id="6OSQ">
    <property type="method" value="EM"/>
    <property type="resolution" value="3.50 A"/>
    <property type="chains" value="l=2-152"/>
</dbReference>
<dbReference type="PDB" id="6OST">
    <property type="method" value="EM"/>
    <property type="resolution" value="4.20 A"/>
    <property type="chains" value="l=2-152"/>
</dbReference>
<dbReference type="PDB" id="6OT3">
    <property type="method" value="EM"/>
    <property type="resolution" value="3.90 A"/>
    <property type="chains" value="l=2-152"/>
</dbReference>
<dbReference type="PDB" id="6OUO">
    <property type="method" value="EM"/>
    <property type="resolution" value="3.70 A"/>
    <property type="chains" value="l=2-152"/>
</dbReference>
<dbReference type="PDB" id="6Q97">
    <property type="method" value="EM"/>
    <property type="resolution" value="3.90 A"/>
    <property type="chains" value="l=2-152"/>
</dbReference>
<dbReference type="PDB" id="6Q98">
    <property type="method" value="EM"/>
    <property type="resolution" value="4.30 A"/>
    <property type="chains" value="l=1-179"/>
</dbReference>
<dbReference type="PDB" id="6Q9A">
    <property type="method" value="EM"/>
    <property type="resolution" value="3.70 A"/>
    <property type="chains" value="l=2-153"/>
</dbReference>
<dbReference type="PDB" id="6SZS">
    <property type="method" value="EM"/>
    <property type="resolution" value="3.06 A"/>
    <property type="chains" value="g=1-179"/>
</dbReference>
<dbReference type="PDB" id="6TBV">
    <property type="method" value="EM"/>
    <property type="resolution" value="2.70 A"/>
    <property type="chains" value="S071=1-179"/>
</dbReference>
<dbReference type="PDB" id="6TC3">
    <property type="method" value="EM"/>
    <property type="resolution" value="2.70 A"/>
    <property type="chains" value="S071=1-179"/>
</dbReference>
<dbReference type="PDB" id="6VU3">
    <property type="method" value="EM"/>
    <property type="resolution" value="3.70 A"/>
    <property type="chains" value="M=2-152"/>
</dbReference>
<dbReference type="PDB" id="6VWL">
    <property type="method" value="EM"/>
    <property type="resolution" value="3.10 A"/>
    <property type="chains" value="f=1-179"/>
</dbReference>
<dbReference type="PDB" id="6VWM">
    <property type="method" value="EM"/>
    <property type="resolution" value="3.40 A"/>
    <property type="chains" value="f=1-179"/>
</dbReference>
<dbReference type="PDB" id="6VWN">
    <property type="method" value="EM"/>
    <property type="resolution" value="3.40 A"/>
    <property type="chains" value="f=1-179"/>
</dbReference>
<dbReference type="PDB" id="6VYQ">
    <property type="method" value="EM"/>
    <property type="resolution" value="3.70 A"/>
    <property type="chains" value="M=1-179"/>
</dbReference>
<dbReference type="PDB" id="6VYR">
    <property type="method" value="EM"/>
    <property type="resolution" value="3.80 A"/>
    <property type="chains" value="M=1-179"/>
</dbReference>
<dbReference type="PDB" id="6VYS">
    <property type="method" value="EM"/>
    <property type="resolution" value="3.70 A"/>
    <property type="chains" value="M=1-179"/>
</dbReference>
<dbReference type="PDB" id="6VYT">
    <property type="method" value="EM"/>
    <property type="resolution" value="14.00 A"/>
    <property type="chains" value="M=1-179"/>
</dbReference>
<dbReference type="PDB" id="6VYU">
    <property type="method" value="EM"/>
    <property type="resolution" value="7.00 A"/>
    <property type="chains" value="M=1-179"/>
</dbReference>
<dbReference type="PDB" id="6VYW">
    <property type="method" value="EM"/>
    <property type="resolution" value="7.00 A"/>
    <property type="chains" value="M=1-179"/>
</dbReference>
<dbReference type="PDB" id="6VYX">
    <property type="method" value="EM"/>
    <property type="resolution" value="9.90 A"/>
    <property type="chains" value="M=1-179"/>
</dbReference>
<dbReference type="PDB" id="6VYY">
    <property type="method" value="EM"/>
    <property type="resolution" value="9.90 A"/>
    <property type="chains" value="M=1-179"/>
</dbReference>
<dbReference type="PDB" id="6VYZ">
    <property type="method" value="EM"/>
    <property type="resolution" value="9.90 A"/>
    <property type="chains" value="M=1-179"/>
</dbReference>
<dbReference type="PDB" id="6VZ2">
    <property type="method" value="EM"/>
    <property type="resolution" value="10.00 A"/>
    <property type="chains" value="M=1-179"/>
</dbReference>
<dbReference type="PDB" id="6VZ3">
    <property type="method" value="EM"/>
    <property type="resolution" value="8.90 A"/>
    <property type="chains" value="M=2-152"/>
</dbReference>
<dbReference type="PDB" id="6VZ5">
    <property type="method" value="EM"/>
    <property type="resolution" value="8.90 A"/>
    <property type="chains" value="M=1-179"/>
</dbReference>
<dbReference type="PDB" id="6VZ7">
    <property type="method" value="EM"/>
    <property type="resolution" value="7.00 A"/>
    <property type="chains" value="M=2-152"/>
</dbReference>
<dbReference type="PDB" id="6VZJ">
    <property type="method" value="EM"/>
    <property type="resolution" value="4.10 A"/>
    <property type="chains" value="M=2-152"/>
</dbReference>
<dbReference type="PDB" id="6W7M">
    <property type="method" value="EM"/>
    <property type="resolution" value="3.80 A"/>
    <property type="chains" value="G=1-179"/>
</dbReference>
<dbReference type="PDB" id="6WD0">
    <property type="method" value="EM"/>
    <property type="resolution" value="3.00 A"/>
    <property type="chains" value="L=2-152"/>
</dbReference>
<dbReference type="PDB" id="6WD1">
    <property type="method" value="EM"/>
    <property type="resolution" value="3.30 A"/>
    <property type="chains" value="L=2-152"/>
</dbReference>
<dbReference type="PDB" id="6WD2">
    <property type="method" value="EM"/>
    <property type="resolution" value="3.60 A"/>
    <property type="chains" value="L=2-152"/>
</dbReference>
<dbReference type="PDB" id="6WD3">
    <property type="method" value="EM"/>
    <property type="resolution" value="3.60 A"/>
    <property type="chains" value="L=2-152"/>
</dbReference>
<dbReference type="PDB" id="6WD4">
    <property type="method" value="EM"/>
    <property type="resolution" value="3.70 A"/>
    <property type="chains" value="L=2-152"/>
</dbReference>
<dbReference type="PDB" id="6WD5">
    <property type="method" value="EM"/>
    <property type="resolution" value="3.60 A"/>
    <property type="chains" value="L=2-152"/>
</dbReference>
<dbReference type="PDB" id="6WD6">
    <property type="method" value="EM"/>
    <property type="resolution" value="3.70 A"/>
    <property type="chains" value="L=2-152"/>
</dbReference>
<dbReference type="PDB" id="6WD7">
    <property type="method" value="EM"/>
    <property type="resolution" value="3.90 A"/>
    <property type="chains" value="L=2-152"/>
</dbReference>
<dbReference type="PDB" id="6WD8">
    <property type="method" value="EM"/>
    <property type="resolution" value="3.70 A"/>
    <property type="chains" value="L=2-152"/>
</dbReference>
<dbReference type="PDB" id="6WD9">
    <property type="method" value="EM"/>
    <property type="resolution" value="3.70 A"/>
    <property type="chains" value="L=2-152"/>
</dbReference>
<dbReference type="PDB" id="6WDA">
    <property type="method" value="EM"/>
    <property type="resolution" value="3.80 A"/>
    <property type="chains" value="L=2-152"/>
</dbReference>
<dbReference type="PDB" id="6WDB">
    <property type="method" value="EM"/>
    <property type="resolution" value="4.00 A"/>
    <property type="chains" value="L=2-152"/>
</dbReference>
<dbReference type="PDB" id="6WDC">
    <property type="method" value="EM"/>
    <property type="resolution" value="4.20 A"/>
    <property type="chains" value="L=2-152"/>
</dbReference>
<dbReference type="PDB" id="6WDD">
    <property type="method" value="EM"/>
    <property type="resolution" value="3.20 A"/>
    <property type="chains" value="L=2-152"/>
</dbReference>
<dbReference type="PDB" id="6WDE">
    <property type="method" value="EM"/>
    <property type="resolution" value="3.00 A"/>
    <property type="chains" value="L=2-152"/>
</dbReference>
<dbReference type="PDB" id="6WDF">
    <property type="method" value="EM"/>
    <property type="resolution" value="3.30 A"/>
    <property type="chains" value="L=2-152"/>
</dbReference>
<dbReference type="PDB" id="6WDG">
    <property type="method" value="EM"/>
    <property type="resolution" value="3.30 A"/>
    <property type="chains" value="L=2-152"/>
</dbReference>
<dbReference type="PDB" id="6WDH">
    <property type="method" value="EM"/>
    <property type="resolution" value="4.30 A"/>
    <property type="chains" value="L=2-152"/>
</dbReference>
<dbReference type="PDB" id="6WDI">
    <property type="method" value="EM"/>
    <property type="resolution" value="4.00 A"/>
    <property type="chains" value="L=2-152"/>
</dbReference>
<dbReference type="PDB" id="6WDJ">
    <property type="method" value="EM"/>
    <property type="resolution" value="3.70 A"/>
    <property type="chains" value="L=2-152"/>
</dbReference>
<dbReference type="PDB" id="6WDK">
    <property type="method" value="EM"/>
    <property type="resolution" value="3.60 A"/>
    <property type="chains" value="L=2-152"/>
</dbReference>
<dbReference type="PDB" id="6WDL">
    <property type="method" value="EM"/>
    <property type="resolution" value="3.70 A"/>
    <property type="chains" value="L=2-152"/>
</dbReference>
<dbReference type="PDB" id="6WDM">
    <property type="method" value="EM"/>
    <property type="resolution" value="3.60 A"/>
    <property type="chains" value="L=2-152"/>
</dbReference>
<dbReference type="PDB" id="6WNV">
    <property type="method" value="EM"/>
    <property type="resolution" value="3.50 A"/>
    <property type="chains" value="L=2-152"/>
</dbReference>
<dbReference type="PDB" id="6WNW">
    <property type="method" value="EM"/>
    <property type="resolution" value="3.20 A"/>
    <property type="chains" value="L=2-152"/>
</dbReference>
<dbReference type="PDB" id="6X6T">
    <property type="method" value="EM"/>
    <property type="resolution" value="3.20 A"/>
    <property type="chains" value="M=1-179"/>
</dbReference>
<dbReference type="PDB" id="6X7F">
    <property type="method" value="EM"/>
    <property type="resolution" value="3.50 A"/>
    <property type="chains" value="M=1-179"/>
</dbReference>
<dbReference type="PDB" id="6X7K">
    <property type="method" value="EM"/>
    <property type="resolution" value="3.10 A"/>
    <property type="chains" value="M=1-179"/>
</dbReference>
<dbReference type="PDB" id="6X9Q">
    <property type="method" value="EM"/>
    <property type="resolution" value="4.80 A"/>
    <property type="chains" value="M=1-179"/>
</dbReference>
<dbReference type="PDB" id="6XDQ">
    <property type="method" value="EM"/>
    <property type="resolution" value="3.70 A"/>
    <property type="chains" value="M=1-179"/>
</dbReference>
<dbReference type="PDB" id="6XDR">
    <property type="method" value="EM"/>
    <property type="resolution" value="4.70 A"/>
    <property type="chains" value="M=1-179"/>
</dbReference>
<dbReference type="PDB" id="6XE0">
    <property type="method" value="EM"/>
    <property type="resolution" value="6.80 A"/>
    <property type="chains" value="F=2-152"/>
</dbReference>
<dbReference type="PDB" id="6XGF">
    <property type="method" value="EM"/>
    <property type="resolution" value="5.00 A"/>
    <property type="chains" value="M=1-179"/>
</dbReference>
<dbReference type="PDB" id="6XII">
    <property type="method" value="EM"/>
    <property type="resolution" value="7.00 A"/>
    <property type="chains" value="M=1-179"/>
</dbReference>
<dbReference type="PDB" id="6XIJ">
    <property type="method" value="EM"/>
    <property type="resolution" value="8.00 A"/>
    <property type="chains" value="M=1-179"/>
</dbReference>
<dbReference type="PDB" id="6XZA">
    <property type="method" value="EM"/>
    <property type="resolution" value="2.66 A"/>
    <property type="chains" value="G1=2-152"/>
</dbReference>
<dbReference type="PDB" id="6XZB">
    <property type="method" value="EM"/>
    <property type="resolution" value="2.54 A"/>
    <property type="chains" value="G1=2-152"/>
</dbReference>
<dbReference type="PDB" id="6Y69">
    <property type="method" value="EM"/>
    <property type="resolution" value="2.86 A"/>
    <property type="chains" value="g=2-156"/>
</dbReference>
<dbReference type="PDB" id="6ZTJ">
    <property type="method" value="EM"/>
    <property type="resolution" value="3.40 A"/>
    <property type="chains" value="AG=1-156"/>
</dbReference>
<dbReference type="PDB" id="6ZTL">
    <property type="method" value="EM"/>
    <property type="resolution" value="3.50 A"/>
    <property type="chains" value="AG=1-156"/>
</dbReference>
<dbReference type="PDB" id="6ZTM">
    <property type="method" value="EM"/>
    <property type="resolution" value="3.30 A"/>
    <property type="chains" value="AG=1-156"/>
</dbReference>
<dbReference type="PDB" id="6ZTN">
    <property type="method" value="EM"/>
    <property type="resolution" value="3.90 A"/>
    <property type="chains" value="AG=1-156"/>
</dbReference>
<dbReference type="PDB" id="6ZTO">
    <property type="method" value="EM"/>
    <property type="resolution" value="3.00 A"/>
    <property type="chains" value="AG=1-156"/>
</dbReference>
<dbReference type="PDB" id="6ZTP">
    <property type="method" value="EM"/>
    <property type="resolution" value="3.00 A"/>
    <property type="chains" value="AG=1-156"/>
</dbReference>
<dbReference type="PDB" id="6ZU1">
    <property type="method" value="EM"/>
    <property type="resolution" value="3.00 A"/>
    <property type="chains" value="AG=1-156"/>
</dbReference>
<dbReference type="PDB" id="7ABZ">
    <property type="method" value="EM"/>
    <property type="resolution" value="3.21 A"/>
    <property type="chains" value="l=2-152"/>
</dbReference>
<dbReference type="PDB" id="7AC7">
    <property type="method" value="EM"/>
    <property type="resolution" value="3.08 A"/>
    <property type="chains" value="l=2-152"/>
</dbReference>
<dbReference type="PDB" id="7ACJ">
    <property type="method" value="EM"/>
    <property type="resolution" value="3.20 A"/>
    <property type="chains" value="l=2-152"/>
</dbReference>
<dbReference type="PDB" id="7ACR">
    <property type="method" value="EM"/>
    <property type="resolution" value="3.44 A"/>
    <property type="chains" value="l=2-152"/>
</dbReference>
<dbReference type="PDB" id="7AF3">
    <property type="method" value="EM"/>
    <property type="resolution" value="2.82 A"/>
    <property type="chains" value="G=1-179"/>
</dbReference>
<dbReference type="PDB" id="7AF5">
    <property type="method" value="EM"/>
    <property type="resolution" value="2.96 A"/>
    <property type="chains" value="G=1-179"/>
</dbReference>
<dbReference type="PDB" id="7AF8">
    <property type="method" value="EM"/>
    <property type="resolution" value="2.75 A"/>
    <property type="chains" value="G=1-179"/>
</dbReference>
<dbReference type="PDB" id="7AFA">
    <property type="method" value="EM"/>
    <property type="resolution" value="2.95 A"/>
    <property type="chains" value="G=1-179"/>
</dbReference>
<dbReference type="PDB" id="7AFD">
    <property type="method" value="EM"/>
    <property type="resolution" value="3.44 A"/>
    <property type="chains" value="G=1-179"/>
</dbReference>
<dbReference type="PDB" id="7AFH">
    <property type="method" value="EM"/>
    <property type="resolution" value="3.59 A"/>
    <property type="chains" value="G=1-179"/>
</dbReference>
<dbReference type="PDB" id="7AFK">
    <property type="method" value="EM"/>
    <property type="resolution" value="4.90 A"/>
    <property type="chains" value="G=1-179"/>
</dbReference>
<dbReference type="PDB" id="7AFN">
    <property type="method" value="EM"/>
    <property type="resolution" value="3.86 A"/>
    <property type="chains" value="G=1-179"/>
</dbReference>
<dbReference type="PDB" id="7B5K">
    <property type="method" value="EM"/>
    <property type="resolution" value="2.90 A"/>
    <property type="chains" value="g=2-152"/>
</dbReference>
<dbReference type="PDB" id="7BOE">
    <property type="method" value="EM"/>
    <property type="resolution" value="2.90 A"/>
    <property type="chains" value="G=1-179"/>
</dbReference>
<dbReference type="PDB" id="7BOH">
    <property type="method" value="EM"/>
    <property type="resolution" value="2.82 A"/>
    <property type="chains" value="G=1-179"/>
</dbReference>
<dbReference type="PDB" id="7D6Z">
    <property type="method" value="EM"/>
    <property type="resolution" value="3.40 A"/>
    <property type="chains" value="n=1-179"/>
</dbReference>
<dbReference type="PDB" id="7D80">
    <property type="method" value="EM"/>
    <property type="resolution" value="4.10 A"/>
    <property type="chains" value="H=1-179"/>
</dbReference>
<dbReference type="PDB" id="7JSS">
    <property type="method" value="EM"/>
    <property type="resolution" value="3.70 A"/>
    <property type="chains" value="L=2-152"/>
</dbReference>
<dbReference type="PDB" id="7JSW">
    <property type="method" value="EM"/>
    <property type="resolution" value="3.80 A"/>
    <property type="chains" value="L=2-152"/>
</dbReference>
<dbReference type="PDB" id="7JSZ">
    <property type="method" value="EM"/>
    <property type="resolution" value="3.70 A"/>
    <property type="chains" value="L=2-152"/>
</dbReference>
<dbReference type="PDB" id="7JT1">
    <property type="method" value="EM"/>
    <property type="resolution" value="3.30 A"/>
    <property type="chains" value="L=2-152"/>
</dbReference>
<dbReference type="PDB" id="7JT2">
    <property type="method" value="EM"/>
    <property type="resolution" value="3.50 A"/>
    <property type="chains" value="L=2-152"/>
</dbReference>
<dbReference type="PDB" id="7JT3">
    <property type="method" value="EM"/>
    <property type="resolution" value="3.70 A"/>
    <property type="chains" value="L=2-152"/>
</dbReference>
<dbReference type="PDB" id="7K00">
    <property type="method" value="EM"/>
    <property type="resolution" value="1.98 A"/>
    <property type="chains" value="G=1-179"/>
</dbReference>
<dbReference type="PDB" id="7K50">
    <property type="method" value="EM"/>
    <property type="resolution" value="3.40 A"/>
    <property type="chains" value="L=2-152"/>
</dbReference>
<dbReference type="PDB" id="7K51">
    <property type="method" value="EM"/>
    <property type="resolution" value="3.50 A"/>
    <property type="chains" value="L=2-152"/>
</dbReference>
<dbReference type="PDB" id="7K52">
    <property type="method" value="EM"/>
    <property type="resolution" value="3.40 A"/>
    <property type="chains" value="L=2-152"/>
</dbReference>
<dbReference type="PDB" id="7K53">
    <property type="method" value="EM"/>
    <property type="resolution" value="3.20 A"/>
    <property type="chains" value="L=2-152"/>
</dbReference>
<dbReference type="PDB" id="7K54">
    <property type="method" value="EM"/>
    <property type="resolution" value="3.20 A"/>
    <property type="chains" value="L=2-152"/>
</dbReference>
<dbReference type="PDB" id="7K55">
    <property type="method" value="EM"/>
    <property type="resolution" value="3.30 A"/>
    <property type="chains" value="L=2-152"/>
</dbReference>
<dbReference type="PDB" id="7LV0">
    <property type="method" value="EM"/>
    <property type="resolution" value="3.20 A"/>
    <property type="chains" value="L=2-152"/>
</dbReference>
<dbReference type="PDB" id="7M5D">
    <property type="method" value="EM"/>
    <property type="resolution" value="2.80 A"/>
    <property type="chains" value="l=2-152"/>
</dbReference>
<dbReference type="PDB" id="7N1P">
    <property type="method" value="EM"/>
    <property type="resolution" value="2.33 A"/>
    <property type="chains" value="SG=1-179"/>
</dbReference>
<dbReference type="PDB" id="7N2C">
    <property type="method" value="EM"/>
    <property type="resolution" value="2.72 A"/>
    <property type="chains" value="SG=1-179"/>
</dbReference>
<dbReference type="PDB" id="7N2U">
    <property type="method" value="EM"/>
    <property type="resolution" value="2.53 A"/>
    <property type="chains" value="SG=1-179"/>
</dbReference>
<dbReference type="PDB" id="7N2V">
    <property type="method" value="EM"/>
    <property type="resolution" value="2.54 A"/>
    <property type="chains" value="SG=1-179"/>
</dbReference>
<dbReference type="PDB" id="7N30">
    <property type="method" value="EM"/>
    <property type="resolution" value="2.66 A"/>
    <property type="chains" value="SG=1-179"/>
</dbReference>
<dbReference type="PDB" id="7N31">
    <property type="method" value="EM"/>
    <property type="resolution" value="2.69 A"/>
    <property type="chains" value="SG=1-179"/>
</dbReference>
<dbReference type="PDB" id="7NAR">
    <property type="method" value="EM"/>
    <property type="resolution" value="3.00 A"/>
    <property type="chains" value="G=1-179"/>
</dbReference>
<dbReference type="PDB" id="7NAT">
    <property type="method" value="EM"/>
    <property type="resolution" value="3.59 A"/>
    <property type="chains" value="G=1-179"/>
</dbReference>
<dbReference type="PDB" id="7NAU">
    <property type="method" value="EM"/>
    <property type="resolution" value="3.78 A"/>
    <property type="chains" value="G=1-179"/>
</dbReference>
<dbReference type="PDB" id="7NAV">
    <property type="method" value="EM"/>
    <property type="resolution" value="4.80 A"/>
    <property type="chains" value="G=1-179"/>
</dbReference>
<dbReference type="PDB" id="7NAX">
    <property type="method" value="EM"/>
    <property type="resolution" value="2.96 A"/>
    <property type="chains" value="G=1-179"/>
</dbReference>
<dbReference type="PDB" id="7NSO">
    <property type="method" value="EM"/>
    <property type="resolution" value="2.90 A"/>
    <property type="chains" value="g=2-152"/>
</dbReference>
<dbReference type="PDB" id="7NSP">
    <property type="method" value="EM"/>
    <property type="resolution" value="3.50 A"/>
    <property type="chains" value="g=2-152"/>
</dbReference>
<dbReference type="PDB" id="7NSQ">
    <property type="method" value="EM"/>
    <property type="resolution" value="3.10 A"/>
    <property type="chains" value="g=2-152"/>
</dbReference>
<dbReference type="PDB" id="7NWT">
    <property type="method" value="EM"/>
    <property type="resolution" value="2.66 A"/>
    <property type="chains" value="l=1-179"/>
</dbReference>
<dbReference type="PDB" id="7NWW">
    <property type="method" value="EM"/>
    <property type="resolution" value="3.05 A"/>
    <property type="chains" value="k=2-152"/>
</dbReference>
<dbReference type="PDB" id="7O19">
    <property type="method" value="EM"/>
    <property type="resolution" value="2.90 A"/>
    <property type="chains" value="AG=1-179"/>
</dbReference>
<dbReference type="PDB" id="7O1A">
    <property type="method" value="EM"/>
    <property type="resolution" value="2.40 A"/>
    <property type="chains" value="AG=1-179"/>
</dbReference>
<dbReference type="PDB" id="7O1C">
    <property type="method" value="EM"/>
    <property type="resolution" value="2.60 A"/>
    <property type="chains" value="AG=1-179"/>
</dbReference>
<dbReference type="PDB" id="7OE0">
    <property type="method" value="EM"/>
    <property type="resolution" value="2.69 A"/>
    <property type="chains" value="G=2-179"/>
</dbReference>
<dbReference type="PDB" id="7OE1">
    <property type="method" value="EM"/>
    <property type="resolution" value="3.05 A"/>
    <property type="chains" value="G=2-179"/>
</dbReference>
<dbReference type="PDB" id="7OIF">
    <property type="method" value="EM"/>
    <property type="resolution" value="3.00 A"/>
    <property type="chains" value="k=2-152"/>
</dbReference>
<dbReference type="PDB" id="7OIG">
    <property type="method" value="EM"/>
    <property type="resolution" value="3.20 A"/>
    <property type="chains" value="k=2-152"/>
</dbReference>
<dbReference type="PDB" id="7OII">
    <property type="method" value="EM"/>
    <property type="resolution" value="3.00 A"/>
    <property type="chains" value="k=2-152"/>
</dbReference>
<dbReference type="PDB" id="7OIZ">
    <property type="method" value="EM"/>
    <property type="resolution" value="2.90 A"/>
    <property type="chains" value="G=1-179"/>
</dbReference>
<dbReference type="PDB" id="7OJ0">
    <property type="method" value="EM"/>
    <property type="resolution" value="3.50 A"/>
    <property type="chains" value="G=1-179"/>
</dbReference>
<dbReference type="PDB" id="7OT5">
    <property type="method" value="EM"/>
    <property type="resolution" value="2.90 A"/>
    <property type="chains" value="k=2-152"/>
</dbReference>
<dbReference type="PDB" id="7P3K">
    <property type="method" value="EM"/>
    <property type="resolution" value="2.90 A"/>
    <property type="chains" value="G=1-179"/>
</dbReference>
<dbReference type="PDB" id="7PJS">
    <property type="method" value="EM"/>
    <property type="resolution" value="2.35 A"/>
    <property type="chains" value="g=1-179"/>
</dbReference>
<dbReference type="PDB" id="7PJT">
    <property type="method" value="EM"/>
    <property type="resolution" value="6.00 A"/>
    <property type="chains" value="g=1-179"/>
</dbReference>
<dbReference type="PDB" id="7PJU">
    <property type="method" value="EM"/>
    <property type="resolution" value="9.50 A"/>
    <property type="chains" value="g=1-179"/>
</dbReference>
<dbReference type="PDB" id="7PJV">
    <property type="method" value="EM"/>
    <property type="resolution" value="3.10 A"/>
    <property type="chains" value="g=1-179"/>
</dbReference>
<dbReference type="PDB" id="7PJW">
    <property type="method" value="EM"/>
    <property type="resolution" value="4.00 A"/>
    <property type="chains" value="g=1-179"/>
</dbReference>
<dbReference type="PDB" id="7PJX">
    <property type="method" value="EM"/>
    <property type="resolution" value="6.50 A"/>
    <property type="chains" value="g=1-179"/>
</dbReference>
<dbReference type="PDB" id="7PJY">
    <property type="method" value="EM"/>
    <property type="resolution" value="3.10 A"/>
    <property type="chains" value="g=1-179"/>
</dbReference>
<dbReference type="PDB" id="7PJZ">
    <property type="method" value="EM"/>
    <property type="resolution" value="6.00 A"/>
    <property type="chains" value="g=1-179"/>
</dbReference>
<dbReference type="PDB" id="7Q4K">
    <property type="method" value="EM"/>
    <property type="resolution" value="3.00 A"/>
    <property type="chains" value="AG=1-179"/>
</dbReference>
<dbReference type="PDB" id="7QG8">
    <property type="method" value="EM"/>
    <property type="resolution" value="3.97 A"/>
    <property type="chains" value="6=1-156"/>
</dbReference>
<dbReference type="PDB" id="7QGH">
    <property type="method" value="EM"/>
    <property type="resolution" value="4.48 A"/>
    <property type="chains" value="6=1-152"/>
</dbReference>
<dbReference type="PDB" id="7QGN">
    <property type="method" value="EM"/>
    <property type="resolution" value="3.37 A"/>
    <property type="chains" value="6=1-156"/>
</dbReference>
<dbReference type="PDB" id="7QGR">
    <property type="method" value="EM"/>
    <property type="resolution" value="5.70 A"/>
    <property type="chains" value="6=1-152"/>
</dbReference>
<dbReference type="PDB" id="7S1G">
    <property type="method" value="EM"/>
    <property type="resolution" value="2.48 A"/>
    <property type="chains" value="n=1-179"/>
</dbReference>
<dbReference type="PDB" id="7S1H">
    <property type="method" value="EM"/>
    <property type="resolution" value="2.35 A"/>
    <property type="chains" value="n=1-179"/>
</dbReference>
<dbReference type="PDB" id="7S1I">
    <property type="method" value="EM"/>
    <property type="resolution" value="2.48 A"/>
    <property type="chains" value="n=1-179"/>
</dbReference>
<dbReference type="PDB" id="7S1J">
    <property type="method" value="EM"/>
    <property type="resolution" value="2.47 A"/>
    <property type="chains" value="n=1-179"/>
</dbReference>
<dbReference type="PDB" id="7S1K">
    <property type="method" value="EM"/>
    <property type="resolution" value="2.42 A"/>
    <property type="chains" value="n=1-179"/>
</dbReference>
<dbReference type="PDB" id="7SA4">
    <property type="method" value="EM"/>
    <property type="resolution" value="2.55 A"/>
    <property type="chains" value="l=1-179"/>
</dbReference>
<dbReference type="PDB" id="7SS9">
    <property type="method" value="EM"/>
    <property type="resolution" value="3.90 A"/>
    <property type="chains" value="L=2-152"/>
</dbReference>
<dbReference type="PDB" id="7SSD">
    <property type="method" value="EM"/>
    <property type="resolution" value="3.30 A"/>
    <property type="chains" value="L=2-152"/>
</dbReference>
<dbReference type="PDB" id="7SSL">
    <property type="method" value="EM"/>
    <property type="resolution" value="3.80 A"/>
    <property type="chains" value="L=2-152"/>
</dbReference>
<dbReference type="PDB" id="7SSN">
    <property type="method" value="EM"/>
    <property type="resolution" value="3.20 A"/>
    <property type="chains" value="L=2-152"/>
</dbReference>
<dbReference type="PDB" id="7SSO">
    <property type="method" value="EM"/>
    <property type="resolution" value="3.20 A"/>
    <property type="chains" value="L=2-152"/>
</dbReference>
<dbReference type="PDB" id="7SSW">
    <property type="method" value="EM"/>
    <property type="resolution" value="3.80 A"/>
    <property type="chains" value="L=2-152"/>
</dbReference>
<dbReference type="PDB" id="7ST2">
    <property type="method" value="EM"/>
    <property type="resolution" value="2.90 A"/>
    <property type="chains" value="L=2-152"/>
</dbReference>
<dbReference type="PDB" id="7ST6">
    <property type="method" value="EM"/>
    <property type="resolution" value="3.00 A"/>
    <property type="chains" value="L=2-152"/>
</dbReference>
<dbReference type="PDB" id="7ST7">
    <property type="method" value="EM"/>
    <property type="resolution" value="3.20 A"/>
    <property type="chains" value="L=2-152"/>
</dbReference>
<dbReference type="PDB" id="7TOS">
    <property type="method" value="EM"/>
    <property type="resolution" value="2.90 A"/>
    <property type="chains" value="S07=2-152"/>
</dbReference>
<dbReference type="PDB" id="7UG7">
    <property type="method" value="EM"/>
    <property type="resolution" value="2.58 A"/>
    <property type="chains" value="SG=1-179"/>
</dbReference>
<dbReference type="PDB" id="7UPH">
    <property type="method" value="EM"/>
    <property type="resolution" value="4.18 A"/>
    <property type="chains" value="b=2-152"/>
</dbReference>
<dbReference type="PDB" id="7Y7C">
    <property type="method" value="EM"/>
    <property type="resolution" value="2.51 A"/>
    <property type="chains" value="G=1-179"/>
</dbReference>
<dbReference type="PDB" id="7Y7D">
    <property type="method" value="EM"/>
    <property type="resolution" value="2.58 A"/>
    <property type="chains" value="G=1-179"/>
</dbReference>
<dbReference type="PDB" id="7Y7E">
    <property type="method" value="EM"/>
    <property type="resolution" value="2.41 A"/>
    <property type="chains" value="G=1-179"/>
</dbReference>
<dbReference type="PDB" id="7Y7F">
    <property type="method" value="EM"/>
    <property type="resolution" value="2.43 A"/>
    <property type="chains" value="G=1-179"/>
</dbReference>
<dbReference type="PDB" id="7Y7G">
    <property type="method" value="EM"/>
    <property type="resolution" value="2.34 A"/>
    <property type="chains" value="G=1-179"/>
</dbReference>
<dbReference type="PDB" id="7Y7H">
    <property type="method" value="EM"/>
    <property type="resolution" value="2.51 A"/>
    <property type="chains" value="G=1-179"/>
</dbReference>
<dbReference type="PDB" id="7ZTA">
    <property type="method" value="EM"/>
    <property type="resolution" value="2.70 A"/>
    <property type="chains" value="S071=2-152"/>
</dbReference>
<dbReference type="PDB" id="8A3L">
    <property type="method" value="EM"/>
    <property type="resolution" value="3.42 A"/>
    <property type="chains" value="G=1-179"/>
</dbReference>
<dbReference type="PDB" id="8AKN">
    <property type="method" value="EM"/>
    <property type="resolution" value="2.30 A"/>
    <property type="chains" value="H=1-179"/>
</dbReference>
<dbReference type="PDB" id="8AM9">
    <property type="method" value="EM"/>
    <property type="resolution" value="2.80 A"/>
    <property type="chains" value="H=1-179"/>
</dbReference>
<dbReference type="PDB" id="8AYE">
    <property type="method" value="EM"/>
    <property type="resolution" value="1.96 A"/>
    <property type="chains" value="G=1-179"/>
</dbReference>
<dbReference type="PDB" id="8B0X">
    <property type="method" value="EM"/>
    <property type="resolution" value="1.55 A"/>
    <property type="chains" value="G=1-179"/>
</dbReference>
<dbReference type="PDB" id="8B7Y">
    <property type="method" value="EM"/>
    <property type="resolution" value="3.00 A"/>
    <property type="chains" value="N=1-179"/>
</dbReference>
<dbReference type="PDB" id="8BF7">
    <property type="method" value="EM"/>
    <property type="resolution" value="2.33 A"/>
    <property type="chains" value="k=1-179"/>
</dbReference>
<dbReference type="PDB" id="8BGE">
    <property type="method" value="EM"/>
    <property type="resolution" value="2.11 A"/>
    <property type="chains" value="k=1-179"/>
</dbReference>
<dbReference type="PDB" id="8BGH">
    <property type="method" value="EM"/>
    <property type="resolution" value="2.88 A"/>
    <property type="chains" value="k=1-179"/>
</dbReference>
<dbReference type="PDB" id="8BH4">
    <property type="method" value="EM"/>
    <property type="resolution" value="2.62 A"/>
    <property type="chains" value="k=1-179"/>
</dbReference>
<dbReference type="PDB" id="8BHJ">
    <property type="method" value="EM"/>
    <property type="resolution" value="2.81 A"/>
    <property type="chains" value="k=1-179"/>
</dbReference>
<dbReference type="PDB" id="8BHL">
    <property type="method" value="EM"/>
    <property type="resolution" value="2.21 A"/>
    <property type="chains" value="k=1-179"/>
</dbReference>
<dbReference type="PDB" id="8BHN">
    <property type="method" value="EM"/>
    <property type="resolution" value="2.85 A"/>
    <property type="chains" value="k=1-179"/>
</dbReference>
<dbReference type="PDB" id="8BHP">
    <property type="method" value="EM"/>
    <property type="resolution" value="2.37 A"/>
    <property type="chains" value="k=1-179"/>
</dbReference>
<dbReference type="PDB" id="8BIL">
    <property type="method" value="EM"/>
    <property type="resolution" value="2.04 A"/>
    <property type="chains" value="k=1-179"/>
</dbReference>
<dbReference type="PDB" id="8BIM">
    <property type="method" value="EM"/>
    <property type="resolution" value="2.04 A"/>
    <property type="chains" value="k=1-179"/>
</dbReference>
<dbReference type="PDB" id="8CA7">
    <property type="method" value="EM"/>
    <property type="resolution" value="2.06 A"/>
    <property type="chains" value="G=1-179"/>
</dbReference>
<dbReference type="PDB" id="8CAZ">
    <property type="method" value="EM"/>
    <property type="resolution" value="2.11 A"/>
    <property type="chains" value="G=1-179"/>
</dbReference>
<dbReference type="PDB" id="8CF1">
    <property type="method" value="EM"/>
    <property type="resolution" value="1.82 A"/>
    <property type="chains" value="G=1-179"/>
</dbReference>
<dbReference type="PDB" id="8CF8">
    <property type="method" value="EM"/>
    <property type="resolution" value="2.20 A"/>
    <property type="chains" value="G=1-179"/>
</dbReference>
<dbReference type="PDB" id="8CGI">
    <property type="method" value="EM"/>
    <property type="resolution" value="1.89 A"/>
    <property type="chains" value="G=1-179"/>
</dbReference>
<dbReference type="PDB" id="8EIU">
    <property type="method" value="EM"/>
    <property type="resolution" value="2.24 A"/>
    <property type="chains" value="G=1-179"/>
</dbReference>
<dbReference type="PDB" id="8EKC">
    <property type="method" value="EM"/>
    <property type="resolution" value="2.70 A"/>
    <property type="chains" value="g=1-156"/>
</dbReference>
<dbReference type="PDB" id="8EMM">
    <property type="method" value="EM"/>
    <property type="resolution" value="2.10 A"/>
    <property type="chains" value="G=1-179"/>
</dbReference>
<dbReference type="PDB" id="8EYT">
    <property type="method" value="EM"/>
    <property type="resolution" value="2.80 A"/>
    <property type="chains" value="G=1-179"/>
</dbReference>
<dbReference type="PDB" id="8FIZ">
    <property type="method" value="EM"/>
    <property type="resolution" value="3.80 A"/>
    <property type="chains" value="AL=1-179"/>
</dbReference>
<dbReference type="PDB" id="8FTO">
    <property type="method" value="EM"/>
    <property type="resolution" value="1.85 A"/>
    <property type="chains" value="G=1-179"/>
</dbReference>
<dbReference type="PDB" id="8FZD">
    <property type="method" value="EM"/>
    <property type="resolution" value="3.10 A"/>
    <property type="chains" value="g=1-156"/>
</dbReference>
<dbReference type="PDB" id="8FZE">
    <property type="method" value="EM"/>
    <property type="resolution" value="3.00 A"/>
    <property type="chains" value="g=1-156"/>
</dbReference>
<dbReference type="PDB" id="8FZF">
    <property type="method" value="EM"/>
    <property type="resolution" value="3.20 A"/>
    <property type="chains" value="g=1-156"/>
</dbReference>
<dbReference type="PDB" id="8FZG">
    <property type="method" value="EM"/>
    <property type="resolution" value="3.10 A"/>
    <property type="chains" value="g=1-156"/>
</dbReference>
<dbReference type="PDB" id="8FZH">
    <property type="method" value="EM"/>
    <property type="resolution" value="2.90 A"/>
    <property type="chains" value="g=1-156"/>
</dbReference>
<dbReference type="PDB" id="8FZI">
    <property type="method" value="EM"/>
    <property type="resolution" value="3.10 A"/>
    <property type="chains" value="g=1-156"/>
</dbReference>
<dbReference type="PDB" id="8FZJ">
    <property type="method" value="EM"/>
    <property type="resolution" value="3.00 A"/>
    <property type="chains" value="g=1-156"/>
</dbReference>
<dbReference type="PDB" id="8G2U">
    <property type="method" value="EM"/>
    <property type="resolution" value="3.00 A"/>
    <property type="chains" value="f=2-152"/>
</dbReference>
<dbReference type="PDB" id="8G31">
    <property type="method" value="EM"/>
    <property type="resolution" value="3.20 A"/>
    <property type="chains" value="f=2-152"/>
</dbReference>
<dbReference type="PDB" id="8G34">
    <property type="method" value="EM"/>
    <property type="resolution" value="3.20 A"/>
    <property type="chains" value="f=2-152"/>
</dbReference>
<dbReference type="PDB" id="8G38">
    <property type="method" value="EM"/>
    <property type="resolution" value="3.20 A"/>
    <property type="chains" value="f=2-152"/>
</dbReference>
<dbReference type="PDB" id="8G6W">
    <property type="method" value="EM"/>
    <property type="resolution" value="2.02 A"/>
    <property type="chains" value="G=1-179"/>
</dbReference>
<dbReference type="PDB" id="8G7P">
    <property type="method" value="EM"/>
    <property type="resolution" value="2.90 A"/>
    <property type="chains" value="g=1-156"/>
</dbReference>
<dbReference type="PDB" id="8G7Q">
    <property type="method" value="EM"/>
    <property type="resolution" value="3.10 A"/>
    <property type="chains" value="g=1-156"/>
</dbReference>
<dbReference type="PDB" id="8G7R">
    <property type="method" value="EM"/>
    <property type="resolution" value="2.80 A"/>
    <property type="chains" value="g=1-156"/>
</dbReference>
<dbReference type="PDB" id="8G7S">
    <property type="method" value="EM"/>
    <property type="resolution" value="3.10 A"/>
    <property type="chains" value="g=1-156"/>
</dbReference>
<dbReference type="PDB" id="8GHU">
    <property type="method" value="EM"/>
    <property type="resolution" value="3.00 A"/>
    <property type="chains" value="g=2-152"/>
</dbReference>
<dbReference type="PDB" id="8HSP">
    <property type="method" value="EM"/>
    <property type="resolution" value="2.32 A"/>
    <property type="chains" value="G=1-179"/>
</dbReference>
<dbReference type="PDB" id="8HTZ">
    <property type="method" value="EM"/>
    <property type="resolution" value="2.40 A"/>
    <property type="chains" value="G=1-179"/>
</dbReference>
<dbReference type="PDB" id="8HU1">
    <property type="method" value="EM"/>
    <property type="resolution" value="2.69 A"/>
    <property type="chains" value="G=1-179"/>
</dbReference>
<dbReference type="PDB" id="8IFB">
    <property type="method" value="EM"/>
    <property type="resolution" value="2.43 A"/>
    <property type="chains" value="G=1-179"/>
</dbReference>
<dbReference type="PDB" id="8IFC">
    <property type="method" value="EM"/>
    <property type="resolution" value="2.90 A"/>
    <property type="chains" value="G=1-179"/>
</dbReference>
<dbReference type="PDB" id="8JSG">
    <property type="method" value="EM"/>
    <property type="resolution" value="4.60 A"/>
    <property type="chains" value="m=2-152"/>
</dbReference>
<dbReference type="PDB" id="8K3O">
    <property type="method" value="EM"/>
    <property type="resolution" value="3.88 A"/>
    <property type="chains" value="G=1-179"/>
</dbReference>
<dbReference type="PDB" id="8K4E">
    <property type="method" value="EM"/>
    <property type="resolution" value="3.40 A"/>
    <property type="chains" value="G=1-179"/>
</dbReference>
<dbReference type="PDB" id="8P16">
    <property type="method" value="EM"/>
    <property type="resolution" value="2.77 A"/>
    <property type="chains" value="l=1-179"/>
</dbReference>
<dbReference type="PDB" id="8P17">
    <property type="method" value="EM"/>
    <property type="resolution" value="2.78 A"/>
    <property type="chains" value="l=1-179"/>
</dbReference>
<dbReference type="PDB" id="8P18">
    <property type="method" value="EM"/>
    <property type="resolution" value="2.77 A"/>
    <property type="chains" value="l=1-179"/>
</dbReference>
<dbReference type="PDB" id="8PEG">
    <property type="method" value="EM"/>
    <property type="resolution" value="3.30 A"/>
    <property type="chains" value="G=1-179"/>
</dbReference>
<dbReference type="PDB" id="8PHJ">
    <property type="method" value="EM"/>
    <property type="resolution" value="3.67 A"/>
    <property type="chains" value="G=1-179"/>
</dbReference>
<dbReference type="PDB" id="8PKL">
    <property type="method" value="EM"/>
    <property type="resolution" value="3.09 A"/>
    <property type="chains" value="G=1-179"/>
</dbReference>
<dbReference type="PDB" id="8PVA">
    <property type="method" value="EM"/>
    <property type="resolution" value="4.50 A"/>
    <property type="chains" value="G=1-179"/>
</dbReference>
<dbReference type="PDB" id="8Q4F">
    <property type="method" value="EM"/>
    <property type="resolution" value="3.10 A"/>
    <property type="chains" value="G=1-179"/>
</dbReference>
<dbReference type="PDB" id="8QBT">
    <property type="method" value="EM"/>
    <property type="resolution" value="2.20 A"/>
    <property type="chains" value="o=1-179"/>
</dbReference>
<dbReference type="PDB" id="8QK7">
    <property type="method" value="EM"/>
    <property type="resolution" value="2.77 A"/>
    <property type="chains" value="l=1-179"/>
</dbReference>
<dbReference type="PDB" id="8QOA">
    <property type="method" value="EM"/>
    <property type="resolution" value="2.00 A"/>
    <property type="chains" value="G=1-179"/>
</dbReference>
<dbReference type="PDB" id="8R3V">
    <property type="method" value="EM"/>
    <property type="resolution" value="3.28 A"/>
    <property type="chains" value="G1/G2=1-179"/>
</dbReference>
<dbReference type="PDB" id="8R6C">
    <property type="method" value="EM"/>
    <property type="resolution" value="2.20 A"/>
    <property type="chains" value="G=1-179"/>
</dbReference>
<dbReference type="PDB" id="8R8M">
    <property type="method" value="EM"/>
    <property type="resolution" value="2.40 A"/>
    <property type="chains" value="G=1-179"/>
</dbReference>
<dbReference type="PDB" id="8RCL">
    <property type="method" value="EM"/>
    <property type="resolution" value="3.49 A"/>
    <property type="chains" value="G1/G2=1-179"/>
</dbReference>
<dbReference type="PDB" id="8RCM">
    <property type="method" value="EM"/>
    <property type="resolution" value="3.59 A"/>
    <property type="chains" value="G1/G2=1-179"/>
</dbReference>
<dbReference type="PDB" id="8RCS">
    <property type="method" value="EM"/>
    <property type="resolution" value="4.46 A"/>
    <property type="chains" value="G1/G2=1-179"/>
</dbReference>
<dbReference type="PDB" id="8RCT">
    <property type="method" value="EM"/>
    <property type="resolution" value="5.32 A"/>
    <property type="chains" value="G1/G2=1-179"/>
</dbReference>
<dbReference type="PDB" id="8SYL">
    <property type="method" value="EM"/>
    <property type="resolution" value="2.90 A"/>
    <property type="chains" value="g=1-156"/>
</dbReference>
<dbReference type="PDB" id="8T5D">
    <property type="method" value="EM"/>
    <property type="resolution" value="3.20 A"/>
    <property type="chains" value="f=2-152"/>
</dbReference>
<dbReference type="PDB" id="8T5H">
    <property type="method" value="EM"/>
    <property type="resolution" value="3.30 A"/>
    <property type="chains" value="f=2-152"/>
</dbReference>
<dbReference type="PDB" id="8UPO">
    <property type="method" value="EM"/>
    <property type="resolution" value="5.50 A"/>
    <property type="chains" value="M=1-179"/>
</dbReference>
<dbReference type="PDB" id="8UPR">
    <property type="method" value="EM"/>
    <property type="resolution" value="5.30 A"/>
    <property type="chains" value="M=1-179"/>
</dbReference>
<dbReference type="PDB" id="8UQL">
    <property type="method" value="EM"/>
    <property type="resolution" value="3.20 A"/>
    <property type="chains" value="M=1-179"/>
</dbReference>
<dbReference type="PDB" id="8UQM">
    <property type="method" value="EM"/>
    <property type="resolution" value="5.30 A"/>
    <property type="chains" value="M=1-179"/>
</dbReference>
<dbReference type="PDB" id="8UQP">
    <property type="method" value="EM"/>
    <property type="resolution" value="3.80 A"/>
    <property type="chains" value="M=1-179"/>
</dbReference>
<dbReference type="PDB" id="8UR0">
    <property type="method" value="EM"/>
    <property type="resolution" value="3.40 A"/>
    <property type="chains" value="M=1-179"/>
</dbReference>
<dbReference type="PDB" id="8URH">
    <property type="method" value="EM"/>
    <property type="resolution" value="5.70 A"/>
    <property type="chains" value="M=1-179"/>
</dbReference>
<dbReference type="PDB" id="8URI">
    <property type="method" value="EM"/>
    <property type="resolution" value="5.30 A"/>
    <property type="chains" value="M=1-179"/>
</dbReference>
<dbReference type="PDB" id="8URX">
    <property type="method" value="EM"/>
    <property type="resolution" value="6.60 A"/>
    <property type="chains" value="M=1-179"/>
</dbReference>
<dbReference type="PDB" id="8URY">
    <property type="method" value="EM"/>
    <property type="resolution" value="3.10 A"/>
    <property type="chains" value="M=1-179"/>
</dbReference>
<dbReference type="PDB" id="8VS9">
    <property type="method" value="EM"/>
    <property type="resolution" value="3.90 A"/>
    <property type="chains" value="S07=1-179"/>
</dbReference>
<dbReference type="PDB" id="8VSA">
    <property type="method" value="EM"/>
    <property type="resolution" value="3.70 A"/>
    <property type="chains" value="S07=1-179"/>
</dbReference>
<dbReference type="PDB" id="8YUO">
    <property type="method" value="EM"/>
    <property type="resolution" value="2.25 A"/>
    <property type="chains" value="G=1-179"/>
</dbReference>
<dbReference type="PDB" id="8YUP">
    <property type="method" value="EM"/>
    <property type="resolution" value="2.39 A"/>
    <property type="chains" value="G=1-179"/>
</dbReference>
<dbReference type="PDB" id="8YUQ">
    <property type="method" value="EM"/>
    <property type="resolution" value="2.41 A"/>
    <property type="chains" value="G=1-179"/>
</dbReference>
<dbReference type="PDB" id="8YUR">
    <property type="method" value="EM"/>
    <property type="resolution" value="2.47 A"/>
    <property type="chains" value="G=1-179"/>
</dbReference>
<dbReference type="PDB" id="8YUS">
    <property type="method" value="EM"/>
    <property type="resolution" value="2.43 A"/>
    <property type="chains" value="G=1-179"/>
</dbReference>
<dbReference type="PDB" id="9AX7">
    <property type="method" value="EM"/>
    <property type="resolution" value="2.63 A"/>
    <property type="chains" value="G=1-179"/>
</dbReference>
<dbReference type="PDB" id="9AX8">
    <property type="method" value="EM"/>
    <property type="resolution" value="2.60 A"/>
    <property type="chains" value="g=2-152"/>
</dbReference>
<dbReference type="PDB" id="9CG5">
    <property type="method" value="EM"/>
    <property type="resolution" value="2.59 A"/>
    <property type="chains" value="G=1-179"/>
</dbReference>
<dbReference type="PDB" id="9CG6">
    <property type="method" value="EM"/>
    <property type="resolution" value="2.61 A"/>
    <property type="chains" value="G=1-179"/>
</dbReference>
<dbReference type="PDB" id="9CG7">
    <property type="method" value="EM"/>
    <property type="resolution" value="2.75 A"/>
    <property type="chains" value="G=1-179"/>
</dbReference>
<dbReference type="PDB" id="9DUK">
    <property type="method" value="EM"/>
    <property type="resolution" value="2.56 A"/>
    <property type="chains" value="G=1-179"/>
</dbReference>
<dbReference type="PDB" id="9DUL">
    <property type="method" value="EM"/>
    <property type="resolution" value="2.56 A"/>
    <property type="chains" value="G=1-179"/>
</dbReference>
<dbReference type="PDB" id="9FBV">
    <property type="method" value="EM"/>
    <property type="resolution" value="2.40 A"/>
    <property type="chains" value="G=1-179"/>
</dbReference>
<dbReference type="PDB" id="9GFT">
    <property type="method" value="EM"/>
    <property type="resolution" value="3.10 A"/>
    <property type="chains" value="6/AG=1-179"/>
</dbReference>
<dbReference type="PDB" id="9GGR">
    <property type="method" value="EM"/>
    <property type="resolution" value="3.20 A"/>
    <property type="chains" value="6/AG=1-179"/>
</dbReference>
<dbReference type="PDB" id="9GR1">
    <property type="method" value="EM"/>
    <property type="resolution" value="3.17 A"/>
    <property type="chains" value="G=1-179"/>
</dbReference>
<dbReference type="PDB" id="9GUP">
    <property type="method" value="EM"/>
    <property type="resolution" value="2.80 A"/>
    <property type="chains" value="H=1-156"/>
</dbReference>
<dbReference type="PDB" id="9GUQ">
    <property type="method" value="EM"/>
    <property type="resolution" value="3.10 A"/>
    <property type="chains" value="H=1-156"/>
</dbReference>
<dbReference type="PDB" id="9GUS">
    <property type="method" value="EM"/>
    <property type="resolution" value="3.50 A"/>
    <property type="chains" value="H=1-156"/>
</dbReference>
<dbReference type="PDB" id="9GUT">
    <property type="method" value="EM"/>
    <property type="resolution" value="2.80 A"/>
    <property type="chains" value="H=1-156"/>
</dbReference>
<dbReference type="PDB" id="9GUU">
    <property type="method" value="EM"/>
    <property type="resolution" value="2.50 A"/>
    <property type="chains" value="H=1-156"/>
</dbReference>
<dbReference type="PDB" id="9GUV">
    <property type="method" value="EM"/>
    <property type="resolution" value="3.00 A"/>
    <property type="chains" value="H=1-156"/>
</dbReference>
<dbReference type="PDB" id="9GUW">
    <property type="method" value="EM"/>
    <property type="resolution" value="3.10 A"/>
    <property type="chains" value="H=1-156"/>
</dbReference>
<dbReference type="PDB" id="9GUX">
    <property type="method" value="EM"/>
    <property type="resolution" value="3.30 A"/>
    <property type="chains" value="H=1-156"/>
</dbReference>
<dbReference type="PDB" id="9MOR">
    <property type="method" value="EM"/>
    <property type="resolution" value="2.65 A"/>
    <property type="chains" value="l=1-179"/>
</dbReference>
<dbReference type="PDB" id="9MQ4">
    <property type="method" value="EM"/>
    <property type="resolution" value="2.78 A"/>
    <property type="chains" value="l=1-179"/>
</dbReference>
<dbReference type="PDBsum" id="1EG0"/>
<dbReference type="PDBsum" id="1ML5"/>
<dbReference type="PDBsum" id="2YKR"/>
<dbReference type="PDBsum" id="3J5S"/>
<dbReference type="PDBsum" id="3J9Y"/>
<dbReference type="PDBsum" id="3J9Z"/>
<dbReference type="PDBsum" id="3JA1"/>
<dbReference type="PDBsum" id="3JBU"/>
<dbReference type="PDBsum" id="3JBV"/>
<dbReference type="PDBsum" id="3JCD"/>
<dbReference type="PDBsum" id="3JCE"/>
<dbReference type="PDBsum" id="3JCJ"/>
<dbReference type="PDBsum" id="3JCN"/>
<dbReference type="PDBsum" id="4A2I"/>
<dbReference type="PDBsum" id="4ADV"/>
<dbReference type="PDBsum" id="4U1U"/>
<dbReference type="PDBsum" id="4U1V"/>
<dbReference type="PDBsum" id="4U20"/>
<dbReference type="PDBsum" id="4U24"/>
<dbReference type="PDBsum" id="4U25"/>
<dbReference type="PDBsum" id="4U26"/>
<dbReference type="PDBsum" id="4U27"/>
<dbReference type="PDBsum" id="4V47"/>
<dbReference type="PDBsum" id="4V48"/>
<dbReference type="PDBsum" id="4V4H"/>
<dbReference type="PDBsum" id="4V4Q"/>
<dbReference type="PDBsum" id="4V4V"/>
<dbReference type="PDBsum" id="4V4W"/>
<dbReference type="PDBsum" id="4V50"/>
<dbReference type="PDBsum" id="4V52"/>
<dbReference type="PDBsum" id="4V53"/>
<dbReference type="PDBsum" id="4V54"/>
<dbReference type="PDBsum" id="4V55"/>
<dbReference type="PDBsum" id="4V56"/>
<dbReference type="PDBsum" id="4V57"/>
<dbReference type="PDBsum" id="4V5B"/>
<dbReference type="PDBsum" id="4V5H"/>
<dbReference type="PDBsum" id="4V5Y"/>
<dbReference type="PDBsum" id="4V64"/>
<dbReference type="PDBsum" id="4V65"/>
<dbReference type="PDBsum" id="4V66"/>
<dbReference type="PDBsum" id="4V69"/>
<dbReference type="PDBsum" id="4V6C"/>
<dbReference type="PDBsum" id="4V6D"/>
<dbReference type="PDBsum" id="4V6E"/>
<dbReference type="PDBsum" id="4V6K"/>
<dbReference type="PDBsum" id="4V6L"/>
<dbReference type="PDBsum" id="4V6M"/>
<dbReference type="PDBsum" id="4V6N"/>
<dbReference type="PDBsum" id="4V6O"/>
<dbReference type="PDBsum" id="4V6P"/>
<dbReference type="PDBsum" id="4V6Q"/>
<dbReference type="PDBsum" id="4V6R"/>
<dbReference type="PDBsum" id="4V6S"/>
<dbReference type="PDBsum" id="4V6T"/>
<dbReference type="PDBsum" id="4V6V"/>
<dbReference type="PDBsum" id="4V6Y"/>
<dbReference type="PDBsum" id="4V6Z"/>
<dbReference type="PDBsum" id="4V70"/>
<dbReference type="PDBsum" id="4V71"/>
<dbReference type="PDBsum" id="4V72"/>
<dbReference type="PDBsum" id="4V73"/>
<dbReference type="PDBsum" id="4V74"/>
<dbReference type="PDBsum" id="4V75"/>
<dbReference type="PDBsum" id="4V76"/>
<dbReference type="PDBsum" id="4V77"/>
<dbReference type="PDBsum" id="4V78"/>
<dbReference type="PDBsum" id="4V79"/>
<dbReference type="PDBsum" id="4V7A"/>
<dbReference type="PDBsum" id="4V7B"/>
<dbReference type="PDBsum" id="4V7C"/>
<dbReference type="PDBsum" id="4V7D"/>
<dbReference type="PDBsum" id="4V7I"/>
<dbReference type="PDBsum" id="4V7S"/>
<dbReference type="PDBsum" id="4V7T"/>
<dbReference type="PDBsum" id="4V7U"/>
<dbReference type="PDBsum" id="4V7V"/>
<dbReference type="PDBsum" id="4V85"/>
<dbReference type="PDBsum" id="4V89"/>
<dbReference type="PDBsum" id="4V9C"/>
<dbReference type="PDBsum" id="4V9D"/>
<dbReference type="PDBsum" id="4V9O"/>
<dbReference type="PDBsum" id="4V9P"/>
<dbReference type="PDBsum" id="4WF1"/>
<dbReference type="PDBsum" id="4WOI"/>
<dbReference type="PDBsum" id="4WWW"/>
<dbReference type="PDBsum" id="4YBB"/>
<dbReference type="PDBsum" id="5AFI"/>
<dbReference type="PDBsum" id="5H5U"/>
<dbReference type="PDBsum" id="5IQR"/>
<dbReference type="PDBsum" id="5IT8"/>
<dbReference type="PDBsum" id="5J5B"/>
<dbReference type="PDBsum" id="5J7L"/>
<dbReference type="PDBsum" id="5J88"/>
<dbReference type="PDBsum" id="5J8A"/>
<dbReference type="PDBsum" id="5J91"/>
<dbReference type="PDBsum" id="5JC9"/>
<dbReference type="PDBsum" id="5JTE"/>
<dbReference type="PDBsum" id="5JU8"/>
<dbReference type="PDBsum" id="5KCR"/>
<dbReference type="PDBsum" id="5KCS"/>
<dbReference type="PDBsum" id="5KPS"/>
<dbReference type="PDBsum" id="5KPV"/>
<dbReference type="PDBsum" id="5KPW"/>
<dbReference type="PDBsum" id="5KPX"/>
<dbReference type="PDBsum" id="5L3P"/>
<dbReference type="PDBsum" id="5LZA"/>
<dbReference type="PDBsum" id="5LZB"/>
<dbReference type="PDBsum" id="5LZC"/>
<dbReference type="PDBsum" id="5LZD"/>
<dbReference type="PDBsum" id="5LZE"/>
<dbReference type="PDBsum" id="5LZF"/>
<dbReference type="PDBsum" id="5MDV"/>
<dbReference type="PDBsum" id="5MDW"/>
<dbReference type="PDBsum" id="5MDY"/>
<dbReference type="PDBsum" id="5MDZ"/>
<dbReference type="PDBsum" id="5ME0"/>
<dbReference type="PDBsum" id="5ME1"/>
<dbReference type="PDBsum" id="5MGP"/>
<dbReference type="PDBsum" id="5MY1"/>
<dbReference type="PDBsum" id="5NO2"/>
<dbReference type="PDBsum" id="5NO3"/>
<dbReference type="PDBsum" id="5NO4"/>
<dbReference type="PDBsum" id="5NP6"/>
<dbReference type="PDBsum" id="5NWY"/>
<dbReference type="PDBsum" id="5O2R"/>
<dbReference type="PDBsum" id="5U4I"/>
<dbReference type="PDBsum" id="5U9F"/>
<dbReference type="PDBsum" id="5U9G"/>
<dbReference type="PDBsum" id="5UYK"/>
<dbReference type="PDBsum" id="5UYL"/>
<dbReference type="PDBsum" id="5UYM"/>
<dbReference type="PDBsum" id="5UYN"/>
<dbReference type="PDBsum" id="5UYP"/>
<dbReference type="PDBsum" id="5UYQ"/>
<dbReference type="PDBsum" id="5UZ4"/>
<dbReference type="PDBsum" id="5WDT"/>
<dbReference type="PDBsum" id="5WE4"/>
<dbReference type="PDBsum" id="5WE6"/>
<dbReference type="PDBsum" id="5WF0"/>
<dbReference type="PDBsum" id="5WFK"/>
<dbReference type="PDBsum" id="5WFS"/>
<dbReference type="PDBsum" id="6AWB"/>
<dbReference type="PDBsum" id="6AWC"/>
<dbReference type="PDBsum" id="6AWD"/>
<dbReference type="PDBsum" id="6BU8"/>
<dbReference type="PDBsum" id="6BY1"/>
<dbReference type="PDBsum" id="6C4I"/>
<dbReference type="PDBsum" id="6DNC"/>
<dbReference type="PDBsum" id="6ENF"/>
<dbReference type="PDBsum" id="6ENJ"/>
<dbReference type="PDBsum" id="6ENU"/>
<dbReference type="PDBsum" id="6GWT"/>
<dbReference type="PDBsum" id="6GXM"/>
<dbReference type="PDBsum" id="6GXN"/>
<dbReference type="PDBsum" id="6GXO"/>
<dbReference type="PDBsum" id="6GXP"/>
<dbReference type="PDBsum" id="6H4N"/>
<dbReference type="PDBsum" id="6H58"/>
<dbReference type="PDBsum" id="6HRM"/>
<dbReference type="PDBsum" id="6I7V"/>
<dbReference type="PDBsum" id="6O7K"/>
<dbReference type="PDBsum" id="6O9J"/>
<dbReference type="PDBsum" id="6O9K"/>
<dbReference type="PDBsum" id="6OFX"/>
<dbReference type="PDBsum" id="6OG7"/>
<dbReference type="PDBsum" id="6OGF"/>
<dbReference type="PDBsum" id="6OGG"/>
<dbReference type="PDBsum" id="6OGI"/>
<dbReference type="PDBsum" id="6OM6"/>
<dbReference type="PDBsum" id="6ORE"/>
<dbReference type="PDBsum" id="6ORL"/>
<dbReference type="PDBsum" id="6OSK"/>
<dbReference type="PDBsum" id="6OSQ"/>
<dbReference type="PDBsum" id="6OST"/>
<dbReference type="PDBsum" id="6OT3"/>
<dbReference type="PDBsum" id="6OUO"/>
<dbReference type="PDBsum" id="6Q97"/>
<dbReference type="PDBsum" id="6Q98"/>
<dbReference type="PDBsum" id="6Q9A"/>
<dbReference type="PDBsum" id="6SZS"/>
<dbReference type="PDBsum" id="6TBV"/>
<dbReference type="PDBsum" id="6TC3"/>
<dbReference type="PDBsum" id="6VU3"/>
<dbReference type="PDBsum" id="6VWL"/>
<dbReference type="PDBsum" id="6VWM"/>
<dbReference type="PDBsum" id="6VWN"/>
<dbReference type="PDBsum" id="6VYQ"/>
<dbReference type="PDBsum" id="6VYR"/>
<dbReference type="PDBsum" id="6VYS"/>
<dbReference type="PDBsum" id="6VYT"/>
<dbReference type="PDBsum" id="6VYU"/>
<dbReference type="PDBsum" id="6VYW"/>
<dbReference type="PDBsum" id="6VYX"/>
<dbReference type="PDBsum" id="6VYY"/>
<dbReference type="PDBsum" id="6VYZ"/>
<dbReference type="PDBsum" id="6VZ2"/>
<dbReference type="PDBsum" id="6VZ3"/>
<dbReference type="PDBsum" id="6VZ5"/>
<dbReference type="PDBsum" id="6VZ7"/>
<dbReference type="PDBsum" id="6VZJ"/>
<dbReference type="PDBsum" id="6W7M"/>
<dbReference type="PDBsum" id="6WD0"/>
<dbReference type="PDBsum" id="6WD1"/>
<dbReference type="PDBsum" id="6WD2"/>
<dbReference type="PDBsum" id="6WD3"/>
<dbReference type="PDBsum" id="6WD4"/>
<dbReference type="PDBsum" id="6WD5"/>
<dbReference type="PDBsum" id="6WD6"/>
<dbReference type="PDBsum" id="6WD7"/>
<dbReference type="PDBsum" id="6WD8"/>
<dbReference type="PDBsum" id="6WD9"/>
<dbReference type="PDBsum" id="6WDA"/>
<dbReference type="PDBsum" id="6WDB"/>
<dbReference type="PDBsum" id="6WDC"/>
<dbReference type="PDBsum" id="6WDD"/>
<dbReference type="PDBsum" id="6WDE"/>
<dbReference type="PDBsum" id="6WDF"/>
<dbReference type="PDBsum" id="6WDG"/>
<dbReference type="PDBsum" id="6WDH"/>
<dbReference type="PDBsum" id="6WDI"/>
<dbReference type="PDBsum" id="6WDJ"/>
<dbReference type="PDBsum" id="6WDK"/>
<dbReference type="PDBsum" id="6WDL"/>
<dbReference type="PDBsum" id="6WDM"/>
<dbReference type="PDBsum" id="6WNV"/>
<dbReference type="PDBsum" id="6WNW"/>
<dbReference type="PDBsum" id="6X6T"/>
<dbReference type="PDBsum" id="6X7F"/>
<dbReference type="PDBsum" id="6X7K"/>
<dbReference type="PDBsum" id="6X9Q"/>
<dbReference type="PDBsum" id="6XDQ"/>
<dbReference type="PDBsum" id="6XDR"/>
<dbReference type="PDBsum" id="6XE0"/>
<dbReference type="PDBsum" id="6XGF"/>
<dbReference type="PDBsum" id="6XII"/>
<dbReference type="PDBsum" id="6XIJ"/>
<dbReference type="PDBsum" id="6XZA"/>
<dbReference type="PDBsum" id="6XZB"/>
<dbReference type="PDBsum" id="6Y69"/>
<dbReference type="PDBsum" id="6ZTJ"/>
<dbReference type="PDBsum" id="6ZTL"/>
<dbReference type="PDBsum" id="6ZTM"/>
<dbReference type="PDBsum" id="6ZTN"/>
<dbReference type="PDBsum" id="6ZTO"/>
<dbReference type="PDBsum" id="6ZTP"/>
<dbReference type="PDBsum" id="6ZU1"/>
<dbReference type="PDBsum" id="7ABZ"/>
<dbReference type="PDBsum" id="7AC7"/>
<dbReference type="PDBsum" id="7ACJ"/>
<dbReference type="PDBsum" id="7ACR"/>
<dbReference type="PDBsum" id="7AF3"/>
<dbReference type="PDBsum" id="7AF5"/>
<dbReference type="PDBsum" id="7AF8"/>
<dbReference type="PDBsum" id="7AFA"/>
<dbReference type="PDBsum" id="7AFD"/>
<dbReference type="PDBsum" id="7AFH"/>
<dbReference type="PDBsum" id="7AFK"/>
<dbReference type="PDBsum" id="7AFN"/>
<dbReference type="PDBsum" id="7B5K"/>
<dbReference type="PDBsum" id="7BOE"/>
<dbReference type="PDBsum" id="7BOH"/>
<dbReference type="PDBsum" id="7D6Z"/>
<dbReference type="PDBsum" id="7D80"/>
<dbReference type="PDBsum" id="7JSS"/>
<dbReference type="PDBsum" id="7JSW"/>
<dbReference type="PDBsum" id="7JSZ"/>
<dbReference type="PDBsum" id="7JT1"/>
<dbReference type="PDBsum" id="7JT2"/>
<dbReference type="PDBsum" id="7JT3"/>
<dbReference type="PDBsum" id="7K00"/>
<dbReference type="PDBsum" id="7K50"/>
<dbReference type="PDBsum" id="7K51"/>
<dbReference type="PDBsum" id="7K52"/>
<dbReference type="PDBsum" id="7K53"/>
<dbReference type="PDBsum" id="7K54"/>
<dbReference type="PDBsum" id="7K55"/>
<dbReference type="PDBsum" id="7LV0"/>
<dbReference type="PDBsum" id="7M5D"/>
<dbReference type="PDBsum" id="7N1P"/>
<dbReference type="PDBsum" id="7N2C"/>
<dbReference type="PDBsum" id="7N2U"/>
<dbReference type="PDBsum" id="7N2V"/>
<dbReference type="PDBsum" id="7N30"/>
<dbReference type="PDBsum" id="7N31"/>
<dbReference type="PDBsum" id="7NAR"/>
<dbReference type="PDBsum" id="7NAT"/>
<dbReference type="PDBsum" id="7NAU"/>
<dbReference type="PDBsum" id="7NAV"/>
<dbReference type="PDBsum" id="7NAX"/>
<dbReference type="PDBsum" id="7NSO"/>
<dbReference type="PDBsum" id="7NSP"/>
<dbReference type="PDBsum" id="7NSQ"/>
<dbReference type="PDBsum" id="7NWT"/>
<dbReference type="PDBsum" id="7NWW"/>
<dbReference type="PDBsum" id="7O19"/>
<dbReference type="PDBsum" id="7O1A"/>
<dbReference type="PDBsum" id="7O1C"/>
<dbReference type="PDBsum" id="7OE0"/>
<dbReference type="PDBsum" id="7OE1"/>
<dbReference type="PDBsum" id="7OIF"/>
<dbReference type="PDBsum" id="7OIG"/>
<dbReference type="PDBsum" id="7OII"/>
<dbReference type="PDBsum" id="7OIZ"/>
<dbReference type="PDBsum" id="7OJ0"/>
<dbReference type="PDBsum" id="7OT5"/>
<dbReference type="PDBsum" id="7P3K"/>
<dbReference type="PDBsum" id="7PJS"/>
<dbReference type="PDBsum" id="7PJT"/>
<dbReference type="PDBsum" id="7PJU"/>
<dbReference type="PDBsum" id="7PJV"/>
<dbReference type="PDBsum" id="7PJW"/>
<dbReference type="PDBsum" id="7PJX"/>
<dbReference type="PDBsum" id="7PJY"/>
<dbReference type="PDBsum" id="7PJZ"/>
<dbReference type="PDBsum" id="7Q4K"/>
<dbReference type="PDBsum" id="7QG8"/>
<dbReference type="PDBsum" id="7QGH"/>
<dbReference type="PDBsum" id="7QGN"/>
<dbReference type="PDBsum" id="7QGR"/>
<dbReference type="PDBsum" id="7S1G"/>
<dbReference type="PDBsum" id="7S1H"/>
<dbReference type="PDBsum" id="7S1I"/>
<dbReference type="PDBsum" id="7S1J"/>
<dbReference type="PDBsum" id="7S1K"/>
<dbReference type="PDBsum" id="7SA4"/>
<dbReference type="PDBsum" id="7SS9"/>
<dbReference type="PDBsum" id="7SSD"/>
<dbReference type="PDBsum" id="7SSL"/>
<dbReference type="PDBsum" id="7SSN"/>
<dbReference type="PDBsum" id="7SSO"/>
<dbReference type="PDBsum" id="7SSW"/>
<dbReference type="PDBsum" id="7ST2"/>
<dbReference type="PDBsum" id="7ST6"/>
<dbReference type="PDBsum" id="7ST7"/>
<dbReference type="PDBsum" id="7TOS"/>
<dbReference type="PDBsum" id="7UG7"/>
<dbReference type="PDBsum" id="7UPH"/>
<dbReference type="PDBsum" id="7Y7C"/>
<dbReference type="PDBsum" id="7Y7D"/>
<dbReference type="PDBsum" id="7Y7E"/>
<dbReference type="PDBsum" id="7Y7F"/>
<dbReference type="PDBsum" id="7Y7G"/>
<dbReference type="PDBsum" id="7Y7H"/>
<dbReference type="PDBsum" id="7ZTA"/>
<dbReference type="PDBsum" id="8A3L"/>
<dbReference type="PDBsum" id="8AKN"/>
<dbReference type="PDBsum" id="8AM9"/>
<dbReference type="PDBsum" id="8AYE"/>
<dbReference type="PDBsum" id="8B0X"/>
<dbReference type="PDBsum" id="8B7Y"/>
<dbReference type="PDBsum" id="8BF7"/>
<dbReference type="PDBsum" id="8BGE"/>
<dbReference type="PDBsum" id="8BGH"/>
<dbReference type="PDBsum" id="8BH4"/>
<dbReference type="PDBsum" id="8BHJ"/>
<dbReference type="PDBsum" id="8BHL"/>
<dbReference type="PDBsum" id="8BHN"/>
<dbReference type="PDBsum" id="8BHP"/>
<dbReference type="PDBsum" id="8BIL"/>
<dbReference type="PDBsum" id="8BIM"/>
<dbReference type="PDBsum" id="8CA7"/>
<dbReference type="PDBsum" id="8CAZ"/>
<dbReference type="PDBsum" id="8CF1"/>
<dbReference type="PDBsum" id="8CF8"/>
<dbReference type="PDBsum" id="8CGI"/>
<dbReference type="PDBsum" id="8EIU"/>
<dbReference type="PDBsum" id="8EKC"/>
<dbReference type="PDBsum" id="8EMM"/>
<dbReference type="PDBsum" id="8EYT"/>
<dbReference type="PDBsum" id="8FIZ"/>
<dbReference type="PDBsum" id="8FTO"/>
<dbReference type="PDBsum" id="8FZD"/>
<dbReference type="PDBsum" id="8FZE"/>
<dbReference type="PDBsum" id="8FZF"/>
<dbReference type="PDBsum" id="8FZG"/>
<dbReference type="PDBsum" id="8FZH"/>
<dbReference type="PDBsum" id="8FZI"/>
<dbReference type="PDBsum" id="8FZJ"/>
<dbReference type="PDBsum" id="8G2U"/>
<dbReference type="PDBsum" id="8G31"/>
<dbReference type="PDBsum" id="8G34"/>
<dbReference type="PDBsum" id="8G38"/>
<dbReference type="PDBsum" id="8G6W"/>
<dbReference type="PDBsum" id="8G7P"/>
<dbReference type="PDBsum" id="8G7Q"/>
<dbReference type="PDBsum" id="8G7R"/>
<dbReference type="PDBsum" id="8G7S"/>
<dbReference type="PDBsum" id="8GHU"/>
<dbReference type="PDBsum" id="8HSP"/>
<dbReference type="PDBsum" id="8HTZ"/>
<dbReference type="PDBsum" id="8HU1"/>
<dbReference type="PDBsum" id="8IFB"/>
<dbReference type="PDBsum" id="8IFC"/>
<dbReference type="PDBsum" id="8JSG"/>
<dbReference type="PDBsum" id="8K3O"/>
<dbReference type="PDBsum" id="8K4E"/>
<dbReference type="PDBsum" id="8P16"/>
<dbReference type="PDBsum" id="8P17"/>
<dbReference type="PDBsum" id="8P18"/>
<dbReference type="PDBsum" id="8PEG"/>
<dbReference type="PDBsum" id="8PHJ"/>
<dbReference type="PDBsum" id="8PKL"/>
<dbReference type="PDBsum" id="8PVA"/>
<dbReference type="PDBsum" id="8Q4F"/>
<dbReference type="PDBsum" id="8QBT"/>
<dbReference type="PDBsum" id="8QK7"/>
<dbReference type="PDBsum" id="8QOA"/>
<dbReference type="PDBsum" id="8R3V"/>
<dbReference type="PDBsum" id="8R6C"/>
<dbReference type="PDBsum" id="8R8M"/>
<dbReference type="PDBsum" id="8RCL"/>
<dbReference type="PDBsum" id="8RCM"/>
<dbReference type="PDBsum" id="8RCS"/>
<dbReference type="PDBsum" id="8RCT"/>
<dbReference type="PDBsum" id="8SYL"/>
<dbReference type="PDBsum" id="8T5D"/>
<dbReference type="PDBsum" id="8T5H"/>
<dbReference type="PDBsum" id="8UPO"/>
<dbReference type="PDBsum" id="8UPR"/>
<dbReference type="PDBsum" id="8UQL"/>
<dbReference type="PDBsum" id="8UQM"/>
<dbReference type="PDBsum" id="8UQP"/>
<dbReference type="PDBsum" id="8UR0"/>
<dbReference type="PDBsum" id="8URH"/>
<dbReference type="PDBsum" id="8URI"/>
<dbReference type="PDBsum" id="8URX"/>
<dbReference type="PDBsum" id="8URY"/>
<dbReference type="PDBsum" id="8VS9"/>
<dbReference type="PDBsum" id="8VSA"/>
<dbReference type="PDBsum" id="8YUO"/>
<dbReference type="PDBsum" id="8YUP"/>
<dbReference type="PDBsum" id="8YUQ"/>
<dbReference type="PDBsum" id="8YUR"/>
<dbReference type="PDBsum" id="8YUS"/>
<dbReference type="PDBsum" id="9AX7"/>
<dbReference type="PDBsum" id="9AX8"/>
<dbReference type="PDBsum" id="9CG5"/>
<dbReference type="PDBsum" id="9CG6"/>
<dbReference type="PDBsum" id="9CG7"/>
<dbReference type="PDBsum" id="9DUK"/>
<dbReference type="PDBsum" id="9DUL"/>
<dbReference type="PDBsum" id="9FBV"/>
<dbReference type="PDBsum" id="9GFT"/>
<dbReference type="PDBsum" id="9GGR"/>
<dbReference type="PDBsum" id="9GR1"/>
<dbReference type="PDBsum" id="9GUP"/>
<dbReference type="PDBsum" id="9GUQ"/>
<dbReference type="PDBsum" id="9GUS"/>
<dbReference type="PDBsum" id="9GUT"/>
<dbReference type="PDBsum" id="9GUU"/>
<dbReference type="PDBsum" id="9GUV"/>
<dbReference type="PDBsum" id="9GUW"/>
<dbReference type="PDBsum" id="9GUX"/>
<dbReference type="PDBsum" id="9MOR"/>
<dbReference type="PDBsum" id="9MQ4"/>
<dbReference type="EMDB" id="EMD-0076"/>
<dbReference type="EMDB" id="EMD-0080"/>
<dbReference type="EMDB" id="EMD-0081"/>
<dbReference type="EMDB" id="EMD-0082"/>
<dbReference type="EMDB" id="EMD-0083"/>
<dbReference type="EMDB" id="EMD-0137"/>
<dbReference type="EMDB" id="EMD-0139"/>
<dbReference type="EMDB" id="EMD-0261"/>
<dbReference type="EMDB" id="EMD-10353"/>
<dbReference type="EMDB" id="EMD-10453"/>
<dbReference type="EMDB" id="EMD-10458"/>
<dbReference type="EMDB" id="EMD-10656"/>
<dbReference type="EMDB" id="EMD-10657"/>
<dbReference type="EMDB" id="EMD-10705"/>
<dbReference type="EMDB" id="EMD-11418"/>
<dbReference type="EMDB" id="EMD-11419"/>
<dbReference type="EMDB" id="EMD-11420"/>
<dbReference type="EMDB" id="EMD-11421"/>
<dbReference type="EMDB" id="EMD-11422"/>
<dbReference type="EMDB" id="EMD-11423"/>
<dbReference type="EMDB" id="EMD-11426"/>
<dbReference type="EMDB" id="EMD-11710"/>
<dbReference type="EMDB" id="EMD-11713"/>
<dbReference type="EMDB" id="EMD-11717"/>
<dbReference type="EMDB" id="EMD-11718"/>
<dbReference type="EMDB" id="EMD-12035"/>
<dbReference type="EMDB" id="EMD-12240"/>
<dbReference type="EMDB" id="EMD-12243"/>
<dbReference type="EMDB" id="EMD-12245"/>
<dbReference type="EMDB" id="EMD-12247"/>
<dbReference type="EMDB" id="EMD-12248"/>
<dbReference type="EMDB" id="EMD-12249"/>
<dbReference type="EMDB" id="EMD-12573"/>
<dbReference type="EMDB" id="EMD-12574"/>
<dbReference type="EMDB" id="EMD-12575"/>
<dbReference type="EMDB" id="EMD-12635"/>
<dbReference type="EMDB" id="EMD-12636"/>
<dbReference type="EMDB" id="EMD-12693"/>
<dbReference type="EMDB" id="EMD-12694"/>
<dbReference type="EMDB" id="EMD-12695"/>
<dbReference type="EMDB" id="EMD-12856"/>
<dbReference type="EMDB" id="EMD-12928"/>
<dbReference type="EMDB" id="EMD-12929"/>
<dbReference type="EMDB" id="EMD-12930"/>
<dbReference type="EMDB" id="EMD-12936"/>
<dbReference type="EMDB" id="EMD-12937"/>
<dbReference type="EMDB" id="EMD-13055"/>
<dbReference type="EMDB" id="EMD-13180"/>
<dbReference type="EMDB" id="EMD-13458"/>
<dbReference type="EMDB" id="EMD-13459"/>
<dbReference type="EMDB" id="EMD-13461"/>
<dbReference type="EMDB" id="EMD-13462"/>
<dbReference type="EMDB" id="EMD-13463"/>
<dbReference type="EMDB" id="EMD-13464"/>
<dbReference type="EMDB" id="EMD-13465"/>
<dbReference type="EMDB" id="EMD-13805"/>
<dbReference type="EMDB" id="EMD-13952"/>
<dbReference type="EMDB" id="EMD-13955"/>
<dbReference type="EMDB" id="EMD-13956"/>
<dbReference type="EMDB" id="EMD-13958"/>
<dbReference type="EMDB" id="EMD-14956"/>
<dbReference type="EMDB" id="EMD-15116"/>
<dbReference type="EMDB" id="EMD-15488"/>
<dbReference type="EMDB" id="EMD-15523"/>
<dbReference type="EMDB" id="EMD-15712"/>
<dbReference type="EMDB" id="EMD-15793"/>
<dbReference type="EMDB" id="EMD-15905"/>
<dbReference type="EMDB" id="EMD-16015"/>
<dbReference type="EMDB" id="EMD-16029"/>
<dbReference type="EMDB" id="EMD-16031"/>
<dbReference type="EMDB" id="EMD-16047"/>
<dbReference type="EMDB" id="EMD-16057"/>
<dbReference type="EMDB" id="EMD-16059"/>
<dbReference type="EMDB" id="EMD-16062"/>
<dbReference type="EMDB" id="EMD-16065"/>
<dbReference type="EMDB" id="EMD-16081"/>
<dbReference type="EMDB" id="EMD-16082"/>
<dbReference type="EMDB" id="EMD-16520"/>
<dbReference type="EMDB" id="EMD-16536"/>
<dbReference type="EMDB" id="EMD-16615"/>
<dbReference type="EMDB" id="EMD-16620"/>
<dbReference type="EMDB" id="EMD-16644"/>
<dbReference type="EMDB" id="EMD-17346"/>
<dbReference type="EMDB" id="EMD-17347"/>
<dbReference type="EMDB" id="EMD-17348"/>
<dbReference type="EMDB" id="EMD-17631"/>
<dbReference type="EMDB" id="EMD-17667"/>
<dbReference type="EMDB" id="EMD-17743"/>
<dbReference type="EMDB" id="EMD-17959"/>
<dbReference type="EMDB" id="EMD-18145"/>
<dbReference type="EMDB" id="EMD-18320"/>
<dbReference type="EMDB" id="EMD-18458"/>
<dbReference type="EMDB" id="EMD-18534"/>
<dbReference type="EMDB" id="EMD-18875"/>
<dbReference type="EMDB" id="EMD-18950"/>
<dbReference type="EMDB" id="EMD-19004"/>
<dbReference type="EMDB" id="EMD-19054"/>
<dbReference type="EMDB" id="EMD-19055"/>
<dbReference type="EMDB" id="EMD-19058"/>
<dbReference type="EMDB" id="EMD-19059"/>
<dbReference type="EMDB" id="EMD-20048"/>
<dbReference type="EMDB" id="EMD-20052"/>
<dbReference type="EMDB" id="EMD-21420"/>
<dbReference type="EMDB" id="EMD-21421"/>
<dbReference type="EMDB" id="EMD-21422"/>
<dbReference type="EMDB" id="EMD-21571"/>
<dbReference type="EMDB" id="EMD-21625"/>
<dbReference type="EMDB" id="EMD-21630"/>
<dbReference type="EMDB" id="EMD-21631"/>
<dbReference type="EMDB" id="EMD-21632"/>
<dbReference type="EMDB" id="EMD-21633"/>
<dbReference type="EMDB" id="EMD-21634"/>
<dbReference type="EMDB" id="EMD-21635"/>
<dbReference type="EMDB" id="EMD-21636"/>
<dbReference type="EMDB" id="EMD-21637"/>
<dbReference type="EMDB" id="EMD-21638"/>
<dbReference type="EMDB" id="EMD-21639"/>
<dbReference type="EMDB" id="EMD-21640"/>
<dbReference type="EMDB" id="EMD-21641"/>
<dbReference type="EMDB" id="EMD-21857"/>
<dbReference type="EMDB" id="EMD-21858"/>
<dbReference type="EMDB" id="EMD-22082"/>
<dbReference type="EMDB" id="EMD-22142"/>
<dbReference type="EMDB" id="EMD-22143"/>
<dbReference type="EMDB" id="EMD-22459"/>
<dbReference type="EMDB" id="EMD-22461"/>
<dbReference type="EMDB" id="EMD-22464"/>
<dbReference type="EMDB" id="EMD-22466"/>
<dbReference type="EMDB" id="EMD-22469"/>
<dbReference type="EMDB" id="EMD-22472"/>
<dbReference type="EMDB" id="EMD-22669"/>
<dbReference type="EMDB" id="EMD-22670"/>
<dbReference type="EMDB" id="EMD-22671"/>
<dbReference type="EMDB" id="EMD-22672"/>
<dbReference type="EMDB" id="EMD-22673"/>
<dbReference type="EMDB" id="EMD-22674"/>
<dbReference type="EMDB" id="EMD-23528"/>
<dbReference type="EMDB" id="EMD-24120"/>
<dbReference type="EMDB" id="EMD-24132"/>
<dbReference type="EMDB" id="EMD-24133"/>
<dbReference type="EMDB" id="EMD-24134"/>
<dbReference type="EMDB" id="EMD-24135"/>
<dbReference type="EMDB" id="EMD-24136"/>
<dbReference type="EMDB" id="EMD-24800"/>
<dbReference type="EMDB" id="EMD-24801"/>
<dbReference type="EMDB" id="EMD-24802"/>
<dbReference type="EMDB" id="EMD-24803"/>
<dbReference type="EMDB" id="EMD-24804"/>
<dbReference type="EMDB" id="EMD-24944"/>
<dbReference type="EMDB" id="EMD-25405"/>
<dbReference type="EMDB" id="EMD-25407"/>
<dbReference type="EMDB" id="EMD-25409"/>
<dbReference type="EMDB" id="EMD-25410"/>
<dbReference type="EMDB" id="EMD-25411"/>
<dbReference type="EMDB" id="EMD-25415"/>
<dbReference type="EMDB" id="EMD-25418"/>
<dbReference type="EMDB" id="EMD-25420"/>
<dbReference type="EMDB" id="EMD-25421"/>
<dbReference type="EMDB" id="EMD-26037"/>
<dbReference type="EMDB" id="EMD-26486"/>
<dbReference type="EMDB" id="EMD-26666"/>
<dbReference type="EMDB" id="EMD-28165"/>
<dbReference type="EMDB" id="EMD-28197"/>
<dbReference type="EMDB" id="EMD-28254"/>
<dbReference type="EMDB" id="EMD-28720"/>
<dbReference type="EMDB" id="EMD-29214"/>
<dbReference type="EMDB" id="EMD-29449"/>
<dbReference type="EMDB" id="EMD-29620"/>
<dbReference type="EMDB" id="EMD-29621"/>
<dbReference type="EMDB" id="EMD-29624"/>
<dbReference type="EMDB" id="EMD-29627"/>
<dbReference type="EMDB" id="EMD-29628"/>
<dbReference type="EMDB" id="EMD-29631"/>
<dbReference type="EMDB" id="EMD-29634"/>
<dbReference type="EMDB" id="EMD-29681"/>
<dbReference type="EMDB" id="EMD-29687"/>
<dbReference type="EMDB" id="EMD-29688"/>
<dbReference type="EMDB" id="EMD-29689"/>
<dbReference type="EMDB" id="EMD-29786"/>
<dbReference type="EMDB" id="EMD-29819"/>
<dbReference type="EMDB" id="EMD-29820"/>
<dbReference type="EMDB" id="EMD-29821"/>
<dbReference type="EMDB" id="EMD-29822"/>
<dbReference type="EMDB" id="EMD-30598"/>
<dbReference type="EMDB" id="EMD-30611"/>
<dbReference type="EMDB" id="EMD-33660"/>
<dbReference type="EMDB" id="EMD-33661"/>
<dbReference type="EMDB" id="EMD-33662"/>
<dbReference type="EMDB" id="EMD-33663"/>
<dbReference type="EMDB" id="EMD-33664"/>
<dbReference type="EMDB" id="EMD-33665"/>
<dbReference type="EMDB" id="EMD-3489"/>
<dbReference type="EMDB" id="EMD-3490"/>
<dbReference type="EMDB" id="EMD-3492"/>
<dbReference type="EMDB" id="EMD-3493"/>
<dbReference type="EMDB" id="EMD-3494"/>
<dbReference type="EMDB" id="EMD-3495"/>
<dbReference type="EMDB" id="EMD-35001"/>
<dbReference type="EMDB" id="EMD-35020"/>
<dbReference type="EMDB" id="EMD-35022"/>
<dbReference type="EMDB" id="EMD-3508"/>
<dbReference type="EMDB" id="EMD-35411"/>
<dbReference type="EMDB" id="EMD-35412"/>
<dbReference type="EMDB" id="EMD-3580"/>
<dbReference type="EMDB" id="EMD-3661"/>
<dbReference type="EMDB" id="EMD-36619"/>
<dbReference type="EMDB" id="EMD-3662"/>
<dbReference type="EMDB" id="EMD-3663"/>
<dbReference type="EMDB" id="EMD-36854"/>
<dbReference type="EMDB" id="EMD-36883"/>
<dbReference type="EMDB" id="EMD-3713"/>
<dbReference type="EMDB" id="EMD-3730"/>
<dbReference type="EMDB" id="EMD-3898"/>
<dbReference type="EMDB" id="EMD-3899"/>
<dbReference type="EMDB" id="EMD-3903"/>
<dbReference type="EMDB" id="EMD-39577"/>
<dbReference type="EMDB" id="EMD-39578"/>
<dbReference type="EMDB" id="EMD-39579"/>
<dbReference type="EMDB" id="EMD-39580"/>
<dbReference type="EMDB" id="EMD-39581"/>
<dbReference type="EMDB" id="EMD-4001"/>
<dbReference type="EMDB" id="EMD-40051"/>
<dbReference type="EMDB" id="EMD-40882"/>
<dbReference type="EMDB" id="EMD-41049"/>
<dbReference type="EMDB" id="EMD-41050"/>
<dbReference type="EMDB" id="EMD-4121"/>
<dbReference type="EMDB" id="EMD-4122"/>
<dbReference type="EMDB" id="EMD-4123"/>
<dbReference type="EMDB" id="EMD-4124"/>
<dbReference type="EMDB" id="EMD-4125"/>
<dbReference type="EMDB" id="EMD-4126"/>
<dbReference type="EMDB" id="EMD-42453"/>
<dbReference type="EMDB" id="EMD-42454"/>
<dbReference type="EMDB" id="EMD-42473"/>
<dbReference type="EMDB" id="EMD-42474"/>
<dbReference type="EMDB" id="EMD-42477"/>
<dbReference type="EMDB" id="EMD-42479"/>
<dbReference type="EMDB" id="EMD-42492"/>
<dbReference type="EMDB" id="EMD-42493"/>
<dbReference type="EMDB" id="EMD-42503"/>
<dbReference type="EMDB" id="EMD-42504"/>
<dbReference type="EMDB" id="EMD-43490"/>
<dbReference type="EMDB" id="EMD-43491"/>
<dbReference type="EMDB" id="EMD-43929"/>
<dbReference type="EMDB" id="EMD-43930"/>
<dbReference type="EMDB" id="EMD-4476"/>
<dbReference type="EMDB" id="EMD-4477"/>
<dbReference type="EMDB" id="EMD-4478"/>
<dbReference type="EMDB" id="EMD-45569"/>
<dbReference type="EMDB" id="EMD-45572"/>
<dbReference type="EMDB" id="EMD-45573"/>
<dbReference type="EMDB" id="EMD-47168"/>
<dbReference type="EMDB" id="EMD-47169"/>
<dbReference type="EMDB" id="EMD-48479"/>
<dbReference type="EMDB" id="EMD-48513"/>
<dbReference type="EMDB" id="EMD-50296"/>
<dbReference type="EMDB" id="EMD-51318"/>
<dbReference type="EMDB" id="EMD-51340"/>
<dbReference type="EMDB" id="EMD-51615"/>
<dbReference type="EMDB" id="EMD-51616"/>
<dbReference type="EMDB" id="EMD-51618"/>
<dbReference type="EMDB" id="EMD-51619"/>
<dbReference type="EMDB" id="EMD-51620"/>
<dbReference type="EMDB" id="EMD-51621"/>
<dbReference type="EMDB" id="EMD-51622"/>
<dbReference type="EMDB" id="EMD-51623"/>
<dbReference type="EMDB" id="EMD-6667"/>
<dbReference type="EMDB" id="EMD-7289"/>
<dbReference type="EMDB" id="EMD-7341"/>
<dbReference type="EMDB" id="EMD-8107"/>
<dbReference type="EMDB" id="EMD-8175"/>
<dbReference type="EMDB" id="EMD-8176"/>
<dbReference type="EMDB" id="EMD-8237"/>
<dbReference type="EMDB" id="EMD-8238"/>
<dbReference type="EMDB" id="EMD-8279"/>
<dbReference type="EMDB" id="EMD-8280"/>
<dbReference type="EMDB" id="EMD-8281"/>
<dbReference type="EMDB" id="EMD-8282"/>
<dbReference type="EMDB" id="EMD-8505"/>
<dbReference type="EMDB" id="EMD-8615"/>
<dbReference type="EMDB" id="EMD-8616"/>
<dbReference type="EMDB" id="EMD-8617"/>
<dbReference type="EMDB" id="EMD-8618"/>
<dbReference type="EMDB" id="EMD-8619"/>
<dbReference type="EMDB" id="EMD-8620"/>
<dbReference type="EMDB" id="EMD-8621"/>
<dbReference type="EMDB" id="EMD-8813"/>
<dbReference type="EMDB" id="EMD-8814"/>
<dbReference type="EMDB" id="EMD-8815"/>
<dbReference type="EMDB" id="EMD-8828"/>
<dbReference type="SMR" id="P02359"/>
<dbReference type="BioGRID" id="4262471">
    <property type="interactions" value="67"/>
</dbReference>
<dbReference type="BioGRID" id="852157">
    <property type="interactions" value="3"/>
</dbReference>
<dbReference type="ComplexPortal" id="CPX-3802">
    <property type="entry name" value="30S small ribosomal subunit"/>
</dbReference>
<dbReference type="DIP" id="DIP-10783N"/>
<dbReference type="FunCoup" id="P02359">
    <property type="interactions" value="1265"/>
</dbReference>
<dbReference type="IntAct" id="P02359">
    <property type="interactions" value="167"/>
</dbReference>
<dbReference type="STRING" id="511145.b3341"/>
<dbReference type="DrugBank" id="DB09093">
    <property type="generic name" value="Chlortetracycline"/>
</dbReference>
<dbReference type="DrugBank" id="DB13092">
    <property type="generic name" value="Meclocycline"/>
</dbReference>
<dbReference type="DrugBank" id="DB12455">
    <property type="generic name" value="Omadacycline"/>
</dbReference>
<dbReference type="DrugBank" id="DB00759">
    <property type="generic name" value="Tetracycline"/>
</dbReference>
<dbReference type="MoonProt" id="P02359"/>
<dbReference type="jPOST" id="P02359"/>
<dbReference type="PaxDb" id="511145-b3341"/>
<dbReference type="EnsemblBacteria" id="AAC76366">
    <property type="protein sequence ID" value="AAC76366"/>
    <property type="gene ID" value="b3341"/>
</dbReference>
<dbReference type="GeneID" id="947846"/>
<dbReference type="KEGG" id="ecj:JW3303"/>
<dbReference type="KEGG" id="eco:b3341"/>
<dbReference type="KEGG" id="ecoc:C3026_18145"/>
<dbReference type="PATRIC" id="fig|1411691.4.peg.3390"/>
<dbReference type="EchoBASE" id="EB0899"/>
<dbReference type="eggNOG" id="COG0049">
    <property type="taxonomic scope" value="Bacteria"/>
</dbReference>
<dbReference type="HOGENOM" id="CLU_072226_1_1_6"/>
<dbReference type="InParanoid" id="P02359"/>
<dbReference type="OMA" id="DDTHRMA"/>
<dbReference type="OrthoDB" id="9807653at2"/>
<dbReference type="PhylomeDB" id="P02359"/>
<dbReference type="BioCyc" id="EcoCyc:EG10906-MONOMER"/>
<dbReference type="BioCyc" id="MetaCyc:EG10906-MONOMER"/>
<dbReference type="EvolutionaryTrace" id="P02359"/>
<dbReference type="PRO" id="PR:P02359"/>
<dbReference type="Proteomes" id="UP000000625">
    <property type="component" value="Chromosome"/>
</dbReference>
<dbReference type="GO" id="GO:0005737">
    <property type="term" value="C:cytoplasm"/>
    <property type="evidence" value="ECO:0000314"/>
    <property type="project" value="ComplexPortal"/>
</dbReference>
<dbReference type="GO" id="GO:0005829">
    <property type="term" value="C:cytosol"/>
    <property type="evidence" value="ECO:0000314"/>
    <property type="project" value="EcoCyc"/>
</dbReference>
<dbReference type="GO" id="GO:0022627">
    <property type="term" value="C:cytosolic small ribosomal subunit"/>
    <property type="evidence" value="ECO:0000314"/>
    <property type="project" value="CAFA"/>
</dbReference>
<dbReference type="GO" id="GO:0016020">
    <property type="term" value="C:membrane"/>
    <property type="evidence" value="ECO:0007005"/>
    <property type="project" value="UniProtKB"/>
</dbReference>
<dbReference type="GO" id="GO:0005840">
    <property type="term" value="C:ribosome"/>
    <property type="evidence" value="ECO:0000318"/>
    <property type="project" value="GO_Central"/>
</dbReference>
<dbReference type="GO" id="GO:0003729">
    <property type="term" value="F:mRNA binding"/>
    <property type="evidence" value="ECO:0000314"/>
    <property type="project" value="CAFA"/>
</dbReference>
<dbReference type="GO" id="GO:0019843">
    <property type="term" value="F:rRNA binding"/>
    <property type="evidence" value="ECO:0000314"/>
    <property type="project" value="EcoCyc"/>
</dbReference>
<dbReference type="GO" id="GO:0003735">
    <property type="term" value="F:structural constituent of ribosome"/>
    <property type="evidence" value="ECO:0000314"/>
    <property type="project" value="CAFA"/>
</dbReference>
<dbReference type="GO" id="GO:0000049">
    <property type="term" value="F:tRNA binding"/>
    <property type="evidence" value="ECO:0007669"/>
    <property type="project" value="UniProtKB-UniRule"/>
</dbReference>
<dbReference type="GO" id="GO:0002181">
    <property type="term" value="P:cytoplasmic translation"/>
    <property type="evidence" value="ECO:0000303"/>
    <property type="project" value="ComplexPortal"/>
</dbReference>
<dbReference type="GO" id="GO:0017148">
    <property type="term" value="P:negative regulation of translation"/>
    <property type="evidence" value="ECO:0000314"/>
    <property type="project" value="CAFA"/>
</dbReference>
<dbReference type="GO" id="GO:0000028">
    <property type="term" value="P:ribosomal small subunit assembly"/>
    <property type="evidence" value="ECO:0000314"/>
    <property type="project" value="CAFA"/>
</dbReference>
<dbReference type="GO" id="GO:0006412">
    <property type="term" value="P:translation"/>
    <property type="evidence" value="ECO:0000318"/>
    <property type="project" value="GO_Central"/>
</dbReference>
<dbReference type="CDD" id="cd14869">
    <property type="entry name" value="uS7_Bacteria"/>
    <property type="match status" value="1"/>
</dbReference>
<dbReference type="FunFam" id="1.10.455.10:FF:000001">
    <property type="entry name" value="30S ribosomal protein S7"/>
    <property type="match status" value="1"/>
</dbReference>
<dbReference type="Gene3D" id="1.10.455.10">
    <property type="entry name" value="Ribosomal protein S7 domain"/>
    <property type="match status" value="1"/>
</dbReference>
<dbReference type="HAMAP" id="MF_00480_B">
    <property type="entry name" value="Ribosomal_uS7_B"/>
    <property type="match status" value="1"/>
</dbReference>
<dbReference type="InterPro" id="IPR000235">
    <property type="entry name" value="Ribosomal_uS7"/>
</dbReference>
<dbReference type="InterPro" id="IPR005717">
    <property type="entry name" value="Ribosomal_uS7_bac/org-type"/>
</dbReference>
<dbReference type="InterPro" id="IPR020606">
    <property type="entry name" value="Ribosomal_uS7_CS"/>
</dbReference>
<dbReference type="InterPro" id="IPR023798">
    <property type="entry name" value="Ribosomal_uS7_dom"/>
</dbReference>
<dbReference type="InterPro" id="IPR036823">
    <property type="entry name" value="Ribosomal_uS7_dom_sf"/>
</dbReference>
<dbReference type="NCBIfam" id="TIGR01029">
    <property type="entry name" value="rpsG_bact"/>
    <property type="match status" value="1"/>
</dbReference>
<dbReference type="PANTHER" id="PTHR11205">
    <property type="entry name" value="RIBOSOMAL PROTEIN S7"/>
    <property type="match status" value="1"/>
</dbReference>
<dbReference type="Pfam" id="PF00177">
    <property type="entry name" value="Ribosomal_S7"/>
    <property type="match status" value="1"/>
</dbReference>
<dbReference type="PIRSF" id="PIRSF002122">
    <property type="entry name" value="RPS7p_RPS7a_RPS5e_RPS7o"/>
    <property type="match status" value="1"/>
</dbReference>
<dbReference type="SUPFAM" id="SSF47973">
    <property type="entry name" value="Ribosomal protein S7"/>
    <property type="match status" value="1"/>
</dbReference>
<dbReference type="PROSITE" id="PS00052">
    <property type="entry name" value="RIBOSOMAL_S7"/>
    <property type="match status" value="1"/>
</dbReference>
<sequence>MPRRRVIGQRKILPDPKFGSELLAKFVNILMVDGKKSTAESIVYSALETLAQRSGKSELEAFEVALENVRPTVEVKSRRVGGSTYQVPVEVRPVRRNALAMRWIVEAARKRGDKSMALRLANELSDAAENKGTAVKKREDVHRMAEANKAFAHYRWLSLRSFSHQAGASSKQPALGYLN</sequence>
<reference key="1">
    <citation type="journal article" date="1997" name="Science">
        <title>The complete genome sequence of Escherichia coli K-12.</title>
        <authorList>
            <person name="Blattner F.R."/>
            <person name="Plunkett G. III"/>
            <person name="Bloch C.A."/>
            <person name="Perna N.T."/>
            <person name="Burland V."/>
            <person name="Riley M."/>
            <person name="Collado-Vides J."/>
            <person name="Glasner J.D."/>
            <person name="Rode C.K."/>
            <person name="Mayhew G.F."/>
            <person name="Gregor J."/>
            <person name="Davis N.W."/>
            <person name="Kirkpatrick H.A."/>
            <person name="Goeden M.A."/>
            <person name="Rose D.J."/>
            <person name="Mau B."/>
            <person name="Shao Y."/>
        </authorList>
    </citation>
    <scope>NUCLEOTIDE SEQUENCE [LARGE SCALE GENOMIC DNA]</scope>
    <source>
        <strain>K12 / MG1655 / ATCC 47076</strain>
    </source>
</reference>
<reference key="2">
    <citation type="journal article" date="2006" name="Mol. Syst. Biol.">
        <title>Highly accurate genome sequences of Escherichia coli K-12 strains MG1655 and W3110.</title>
        <authorList>
            <person name="Hayashi K."/>
            <person name="Morooka N."/>
            <person name="Yamamoto Y."/>
            <person name="Fujita K."/>
            <person name="Isono K."/>
            <person name="Choi S."/>
            <person name="Ohtsubo E."/>
            <person name="Baba T."/>
            <person name="Wanner B.L."/>
            <person name="Mori H."/>
            <person name="Horiuchi T."/>
        </authorList>
    </citation>
    <scope>NUCLEOTIDE SEQUENCE [LARGE SCALE GENOMIC DNA]</scope>
    <source>
        <strain>K12 / W3110 / ATCC 27325 / DSM 5911</strain>
    </source>
</reference>
<reference key="3">
    <citation type="journal article" date="1979" name="Biochimie">
        <title>The primary structure of ribosomal protein S7 from E. coli strains K and B.</title>
        <authorList>
            <person name="Reinbolt J."/>
            <person name="Tritsch D."/>
            <person name="Wittmann-Liebold B."/>
        </authorList>
    </citation>
    <scope>PROTEIN SEQUENCE OF 2-179</scope>
    <scope>SUBUNIT</scope>
    <source>
        <strain>B</strain>
        <strain>K</strain>
    </source>
</reference>
<reference key="4">
    <citation type="journal article" date="1980" name="J. Biol. Chem.">
        <title>DNA sequences from the str operon of Escherichia coli.</title>
        <authorList>
            <person name="Post L.E."/>
            <person name="Nomura M."/>
        </authorList>
    </citation>
    <scope>NUCLEOTIDE SEQUENCE [GENOMIC DNA] OF 1-81 AND 148-179</scope>
    <source>
        <strain>K12</strain>
    </source>
</reference>
<reference key="5">
    <citation type="journal article" date="1992" name="Mol. Gen. Genet.">
        <title>Mutant sequences in the rpsL gene of Escherichia coli B/r: mechanistic implications for spontaneous and ultraviolet light mutagenesis.</title>
        <authorList>
            <person name="Timms A.R."/>
            <person name="Steingrimsdottir H."/>
            <person name="Lehmann A.R."/>
            <person name="Bridges B.A."/>
        </authorList>
    </citation>
    <scope>NUCLEOTIDE SEQUENCE [GENOMIC DNA] OF 1-81</scope>
    <source>
        <strain>B/R</strain>
    </source>
</reference>
<reference key="6">
    <citation type="journal article" date="1992" name="Gene">
        <title>Comparison of the complete sequence of the str operon in Salmonella typhimurium and Escherichia coli.</title>
        <authorList>
            <person name="Johanson U."/>
            <person name="Hughes D."/>
        </authorList>
    </citation>
    <scope>NUCLEOTIDE SEQUENCE [GENOMIC DNA] OF 81-173</scope>
    <source>
        <strain>K12 / MG1655 / ATCC 47076</strain>
    </source>
</reference>
<reference key="7">
    <citation type="submission" date="1992-05" db="EMBL/GenBank/DDBJ databases">
        <authorList>
            <person name="Weigel C.T.O."/>
        </authorList>
    </citation>
    <scope>NUCLEOTIDE SEQUENCE [GENOMIC DNA] OF 147-156</scope>
    <source>
        <strain>L44</strain>
    </source>
</reference>
<reference key="8">
    <citation type="journal article" date="1995" name="EMBO J.">
        <title>Protein-rRNA binding features and their structural and functional implications in ribosomes as determined by cross-linking studies.</title>
        <authorList>
            <person name="Urlaub H."/>
            <person name="Kruft V."/>
            <person name="Bischof O."/>
            <person name="Mueller E.-C."/>
            <person name="Wittmann-Liebold B."/>
        </authorList>
    </citation>
    <scope>PROTEIN SEQUENCE OF 111-131</scope>
    <scope>CROSS-LINKING TO RRNA</scope>
    <scope>SUBUNIT</scope>
    <source>
        <strain>MRE-600</strain>
    </source>
</reference>
<reference key="9">
    <citation type="journal article" date="1980" name="J. Biol. Chem.">
        <title>Photochemical cross-linking of initiation factor-3 to Escherichia coli 30 S ribosomal subunits.</title>
        <authorList>
            <person name="MacKeen L.A."/>
            <person name="Kahan L."/>
            <person name="Wahba A.J."/>
            <person name="Schwartz I."/>
        </authorList>
    </citation>
    <scope>CROSS-LINKING TO IF3</scope>
    <source>
        <strain>B</strain>
    </source>
</reference>
<reference key="10">
    <citation type="journal article" date="1983" name="Biochemistry">
        <title>Direct cross-links between initiation factors 1, 2, and 3 and ribosomal proteins promoted by 2-iminothiolane.</title>
        <authorList>
            <person name="Boileau G."/>
            <person name="Butler P."/>
            <person name="Hershey J.W.B."/>
            <person name="Traut R.R."/>
        </authorList>
    </citation>
    <scope>CROSS-LINKING TO IF3</scope>
    <source>
        <strain>MRE-600</strain>
    </source>
</reference>
<reference key="11">
    <citation type="journal article" date="1988" name="Biochemistry">
        <title>Assembly of the 30S subunit from Escherichia coli ribosomes occurs via two assembly domains which are initiated by S4 and S7.</title>
        <authorList>
            <person name="Nowotny V."/>
            <person name="Nierhaus K.H."/>
        </authorList>
    </citation>
    <scope>ROLE IN SUBUNIT ASSEMBLY</scope>
    <source>
        <strain>K12 / D10</strain>
    </source>
</reference>
<reference key="12">
    <citation type="journal article" date="1994" name="J. Mol. Biol.">
        <title>Post-transcriptional regulation of the str operon in Escherichia coli. Ribosomal protein S7 inhibits coupled translation of S7 but not its independent translation.</title>
        <authorList>
            <person name="Saito K."/>
            <person name="Mattheakis L.C."/>
            <person name="Nomura M."/>
        </authorList>
    </citation>
    <scope>MECHANISM OF TRANSLATION REGULATION</scope>
    <source>
        <strain>K12</strain>
    </source>
</reference>
<reference key="13">
    <citation type="journal article" date="1995" name="Nucleic Acids Res.">
        <title>The ribosomal neighbourhood of the central fold of tRNA: cross-links from position 47 of tRNA located at the A, P or E site.</title>
        <authorList>
            <person name="Osswald M."/>
            <person name="Doering T."/>
            <person name="Brimacombe R."/>
        </authorList>
    </citation>
    <scope>CROSS-LINKING TO THE TRNA CENTRAL FOLD</scope>
    <source>
        <strain>MRE-600</strain>
    </source>
</reference>
<reference key="14">
    <citation type="journal article" date="1999" name="RNA">
        <title>The cross-link from the upstream region of mRNA to ribosomal protein S7 is located in the C-terminal peptide: experimental verification of a prediction from modeling studies.</title>
        <authorList>
            <person name="Greuer B."/>
            <person name="Thiede B."/>
            <person name="Brimacombe R."/>
        </authorList>
    </citation>
    <scope>CROSS-LINKING TO MRNA</scope>
    <source>
        <strain>B</strain>
        <strain>K</strain>
    </source>
</reference>
<reference key="15">
    <citation type="journal article" date="2000" name="J. Mol. Biol.">
        <title>Tagging ribosomal protein S7 allows rapid identification of mutants defective in assembly and function of 30S subunits.</title>
        <authorList>
            <person name="Fredrick K."/>
            <person name="Dunny G.M."/>
            <person name="Noller H.F."/>
        </authorList>
    </citation>
    <scope>MUTAGENESIS OF CONSERVED SURFACE RESIDUES</scope>
    <scope>MUTAGENESIS OF 2-PRO--PHE-18 AND LYS-36</scope>
    <source>
        <strain>K</strain>
    </source>
</reference>
<reference key="16">
    <citation type="journal article" date="2001" name="Nucleic Acids Res.">
        <title>Ribosomal protein S7 from Escherichia coli uses the same determinants to bind 16S ribosomal RNA and its messenger RNA.</title>
        <authorList>
            <person name="Robert F."/>
            <person name="Brakier-Gingras L."/>
        </authorList>
    </citation>
    <scope>MUTAGENESIS OF CONSERVED RESIDUES</scope>
    <scope>MUTAGENESIS OF MET-116</scope>
    <source>
        <strain>K12</strain>
    </source>
</reference>
<reference key="17">
    <citation type="journal article" date="1999" name="Anal. Biochem.">
        <title>Observation of Escherichia coli ribosomal proteins and their posttranslational modifications by mass spectrometry.</title>
        <authorList>
            <person name="Arnold R.J."/>
            <person name="Reilly J.P."/>
        </authorList>
    </citation>
    <scope>MASS SPECTROMETRY</scope>
    <scope>SUBUNIT</scope>
    <source>
        <strain>K12 / ATCC 25404 / DSM 5698 / NCIMB 11290</strain>
    </source>
</reference>
<reference key="18">
    <citation type="journal article" date="2014" name="Curr. Opin. Struct. Biol.">
        <title>A new system for naming ribosomal proteins.</title>
        <authorList>
            <person name="Ban N."/>
            <person name="Beckmann R."/>
            <person name="Cate J.H.D."/>
            <person name="Dinman J.D."/>
            <person name="Dragon F."/>
            <person name="Ellis S.R."/>
            <person name="Lafontaine D.L.J."/>
            <person name="Lindahl L."/>
            <person name="Liljas A."/>
            <person name="Lipton J.M."/>
            <person name="McAlear M.A."/>
            <person name="Moore P.B."/>
            <person name="Noller H.F."/>
            <person name="Ortega J."/>
            <person name="Panse V.G."/>
            <person name="Ramakrishnan V."/>
            <person name="Spahn C.M.T."/>
            <person name="Steitz T.A."/>
            <person name="Tchorzewski M."/>
            <person name="Tollervey D."/>
            <person name="Warren A.J."/>
            <person name="Williamson J.R."/>
            <person name="Wilson D."/>
            <person name="Yonath A."/>
            <person name="Yusupov M."/>
        </authorList>
    </citation>
    <scope>NOMENCLATURE</scope>
</reference>
<reference key="19">
    <citation type="journal article" date="2001" name="Mol. Cell">
        <title>Interaction of translation initiation factor 3 with the 30S ribosomal subunit.</title>
        <authorList>
            <person name="Dallas A."/>
            <person name="Noller H.F."/>
        </authorList>
    </citation>
    <scope>MODELING OF IF-3/30S SUBUNIT INTERACTION</scope>
</reference>
<reference key="20">
    <citation type="journal article" date="2002" name="Nat. Struct. Biol.">
        <title>All-atom homology model of the Escherichia coli 30S ribosomal subunit.</title>
        <authorList>
            <person name="Tung C.-S."/>
            <person name="Joseph S."/>
            <person name="Sanbonmatsu K.Y."/>
        </authorList>
    </citation>
    <scope>3D-STRUCTURE MODELING</scope>
    <scope>SUBUNIT</scope>
</reference>
<reference key="21">
    <citation type="journal article" date="2003" name="Cell">
        <title>Study of the structural dynamics of the E. coli 70S ribosome using real-space refinement.</title>
        <authorList>
            <person name="Gao H."/>
            <person name="Sengupta J."/>
            <person name="Valle M."/>
            <person name="Korostelev A."/>
            <person name="Eswar N."/>
            <person name="Stagg S.M."/>
            <person name="Van Roey P."/>
            <person name="Agrawal R.K."/>
            <person name="Harvey S.C."/>
            <person name="Sali A."/>
            <person name="Chapman M.S."/>
            <person name="Frank J."/>
        </authorList>
    </citation>
    <scope>STRUCTURE BY ELECTRON MICROSCOPY (11.50 ANGSTROMS)</scope>
    <scope>SUBUNIT</scope>
    <source>
        <strain>MRE-600</strain>
    </source>
</reference>
<reference key="22">
    <citation type="journal article" date="2005" name="Science">
        <title>Structures of the bacterial ribosome at 3.5 A resolution.</title>
        <authorList>
            <person name="Schuwirth B.S."/>
            <person name="Borovinskaya M.A."/>
            <person name="Hau C.W."/>
            <person name="Zhang W."/>
            <person name="Vila-Sanjurjo A."/>
            <person name="Holton J.M."/>
            <person name="Cate J.H.D."/>
        </authorList>
    </citation>
    <scope>X-RAY CRYSTALLOGRAPHY (3.46 ANGSTROMS) OF 2 DIFFERENT RIBOSOME STRUCTURES</scope>
    <scope>SUBUNIT</scope>
    <source>
        <strain>MRE-600</strain>
    </source>
</reference>
<reference key="23">
    <citation type="journal article" date="2017" name="Nature">
        <title>Mechanistic insights into the alternative translation termination by ArfA and RF2.</title>
        <authorList>
            <person name="Ma C."/>
            <person name="Kurita D."/>
            <person name="Li N."/>
            <person name="Chen Y."/>
            <person name="Himeno H."/>
            <person name="Gao N."/>
        </authorList>
    </citation>
    <scope>STRUCTURE BY ELECTRON MICROSCOPY (3.0 ANGSTROMS) OF 70S RIBOSOME IN COMPLEX WITH ARFA AND RF2</scope>
    <scope>SUBUNIT</scope>
</reference>
<reference key="24">
    <citation type="journal article" date="2017" name="Nature">
        <title>Structural basis for ArfA-RF2-mediated translation termination on mRNAs lacking stop codons.</title>
        <authorList>
            <person name="Huter P."/>
            <person name="Mueller C."/>
            <person name="Beckert B."/>
            <person name="Arenz S."/>
            <person name="Berninghausen O."/>
            <person name="Beckmann R."/>
            <person name="Wilson D.N."/>
        </authorList>
    </citation>
    <scope>STRUCTURE BY ELECTRON MICROSCOPY (3.1 ANGSTROMS) OF 70S RIBOSOME IN COMPLEX WITH ARFA AND RF2</scope>
    <scope>SUBUNIT</scope>
</reference>
<reference key="25">
    <citation type="journal article" date="2016" name="Science">
        <title>Translational termination without a stop codon.</title>
        <authorList>
            <person name="James N.R."/>
            <person name="Brown A."/>
            <person name="Gordiyenko Y."/>
            <person name="Ramakrishnan V."/>
        </authorList>
    </citation>
    <scope>STRUCTURE BY ELECTRON MICROSCOPY (2.97 ANGSTROMS) OF 70S RIBOSOME IN COMPLEX WITH ARFA AND RF2</scope>
    <scope>SUBUNIT</scope>
</reference>
<reference key="26">
    <citation type="journal article" date="2017" name="Nature">
        <title>Structural basis of co-translational quality control by ArfA and RF2 bound to ribosome.</title>
        <authorList>
            <person name="Zeng F."/>
            <person name="Chen Y."/>
            <person name="Remis J."/>
            <person name="Shekhar M."/>
            <person name="Phillips J.C."/>
            <person name="Tajkhorshid E."/>
            <person name="Jin H."/>
        </authorList>
    </citation>
    <scope>STRUCTURE BY ELECTRON MICROSCOPY (3.52 ANGSTROMS) OF 70S RIBOSOME IN COMPLEX WITH ARFA AND RF2</scope>
    <scope>SUBUNIT</scope>
</reference>